<dbReference type="EMBL" id="J01602">
    <property type="protein sequence ID" value="AAB59148.1"/>
    <property type="molecule type" value="Genomic_DNA"/>
</dbReference>
<dbReference type="EMBL" id="X01861">
    <property type="protein sequence ID" value="CAA25982.1"/>
    <property type="molecule type" value="Genomic_DNA"/>
</dbReference>
<dbReference type="EMBL" id="M11056">
    <property type="protein sequence ID" value="AAA24566.1"/>
    <property type="molecule type" value="Genomic_DNA"/>
</dbReference>
<dbReference type="EMBL" id="L10328">
    <property type="protein sequence ID" value="AAA62054.1"/>
    <property type="molecule type" value="Genomic_DNA"/>
</dbReference>
<dbReference type="EMBL" id="U00096">
    <property type="protein sequence ID" value="AAC76726.1"/>
    <property type="molecule type" value="Genomic_DNA"/>
</dbReference>
<dbReference type="EMBL" id="AP009048">
    <property type="protein sequence ID" value="BAE77591.1"/>
    <property type="molecule type" value="Genomic_DNA"/>
</dbReference>
<dbReference type="RefSeq" id="NP_418158.1">
    <property type="nucleotide sequence ID" value="NC_000913.3"/>
</dbReference>
<dbReference type="RefSeq" id="WP_000831330.1">
    <property type="nucleotide sequence ID" value="NZ_STEB01000015.1"/>
</dbReference>
<dbReference type="PDB" id="2J28">
    <property type="method" value="EM"/>
    <property type="resolution" value="8.00 A"/>
    <property type="chains" value="2=1-46"/>
</dbReference>
<dbReference type="PDB" id="2RDO">
    <property type="method" value="EM"/>
    <property type="resolution" value="9.10 A"/>
    <property type="chains" value="2=1-46"/>
</dbReference>
<dbReference type="PDB" id="3BBX">
    <property type="method" value="EM"/>
    <property type="resolution" value="10.00 A"/>
    <property type="chains" value="2=1-46"/>
</dbReference>
<dbReference type="PDB" id="3J5L">
    <property type="method" value="EM"/>
    <property type="resolution" value="6.60 A"/>
    <property type="chains" value="2=1-46"/>
</dbReference>
<dbReference type="PDB" id="3J7Z">
    <property type="method" value="EM"/>
    <property type="resolution" value="3.90 A"/>
    <property type="chains" value="2=1-46"/>
</dbReference>
<dbReference type="PDB" id="3J8G">
    <property type="method" value="EM"/>
    <property type="resolution" value="5.00 A"/>
    <property type="chains" value="6=1-46"/>
</dbReference>
<dbReference type="PDB" id="3J9Y">
    <property type="method" value="EM"/>
    <property type="resolution" value="3.90 A"/>
    <property type="chains" value="2=1-46"/>
</dbReference>
<dbReference type="PDB" id="3J9Z">
    <property type="method" value="EM"/>
    <property type="resolution" value="3.60 A"/>
    <property type="chains" value="L3=1-46"/>
</dbReference>
<dbReference type="PDB" id="3JA1">
    <property type="method" value="EM"/>
    <property type="resolution" value="3.60 A"/>
    <property type="chains" value="L5=1-46"/>
</dbReference>
<dbReference type="PDB" id="3JBU">
    <property type="method" value="EM"/>
    <property type="resolution" value="3.64 A"/>
    <property type="chains" value="6=1-46"/>
</dbReference>
<dbReference type="PDB" id="3JBV">
    <property type="method" value="EM"/>
    <property type="resolution" value="3.32 A"/>
    <property type="chains" value="6=1-46"/>
</dbReference>
<dbReference type="PDB" id="3JCD">
    <property type="method" value="EM"/>
    <property type="resolution" value="3.70 A"/>
    <property type="chains" value="2=1-46"/>
</dbReference>
<dbReference type="PDB" id="3JCE">
    <property type="method" value="EM"/>
    <property type="resolution" value="3.20 A"/>
    <property type="chains" value="2=1-46"/>
</dbReference>
<dbReference type="PDB" id="3JCJ">
    <property type="method" value="EM"/>
    <property type="resolution" value="3.70 A"/>
    <property type="chains" value="b=1-46"/>
</dbReference>
<dbReference type="PDB" id="3JCN">
    <property type="method" value="EM"/>
    <property type="resolution" value="4.60 A"/>
    <property type="chains" value="2=1-46"/>
</dbReference>
<dbReference type="PDB" id="4CSU">
    <property type="method" value="EM"/>
    <property type="resolution" value="5.50 A"/>
    <property type="chains" value="6=1-46"/>
</dbReference>
<dbReference type="PDB" id="4U1U">
    <property type="method" value="X-ray"/>
    <property type="resolution" value="2.95 A"/>
    <property type="chains" value="B2/D2=1-46"/>
</dbReference>
<dbReference type="PDB" id="4U1V">
    <property type="method" value="X-ray"/>
    <property type="resolution" value="3.00 A"/>
    <property type="chains" value="B2/D2=1-46"/>
</dbReference>
<dbReference type="PDB" id="4U20">
    <property type="method" value="X-ray"/>
    <property type="resolution" value="2.90 A"/>
    <property type="chains" value="B2/D2=1-46"/>
</dbReference>
<dbReference type="PDB" id="4U24">
    <property type="method" value="X-ray"/>
    <property type="resolution" value="2.90 A"/>
    <property type="chains" value="B2/D2=1-46"/>
</dbReference>
<dbReference type="PDB" id="4U25">
    <property type="method" value="X-ray"/>
    <property type="resolution" value="2.90 A"/>
    <property type="chains" value="B2/D2=1-46"/>
</dbReference>
<dbReference type="PDB" id="4U26">
    <property type="method" value="X-ray"/>
    <property type="resolution" value="2.80 A"/>
    <property type="chains" value="B2/D2=1-46"/>
</dbReference>
<dbReference type="PDB" id="4U27">
    <property type="method" value="X-ray"/>
    <property type="resolution" value="2.80 A"/>
    <property type="chains" value="B2/D2=1-46"/>
</dbReference>
<dbReference type="PDB" id="4UY8">
    <property type="method" value="EM"/>
    <property type="resolution" value="3.80 A"/>
    <property type="chains" value="2=1-46"/>
</dbReference>
<dbReference type="PDB" id="4V4H">
    <property type="method" value="X-ray"/>
    <property type="resolution" value="3.46 A"/>
    <property type="chains" value="B2/D2=1-46"/>
</dbReference>
<dbReference type="PDB" id="4V4Q">
    <property type="method" value="X-ray"/>
    <property type="resolution" value="3.46 A"/>
    <property type="chains" value="B2/D2=1-46"/>
</dbReference>
<dbReference type="PDB" id="4V50">
    <property type="method" value="X-ray"/>
    <property type="resolution" value="3.22 A"/>
    <property type="chains" value="B2/D2=1-46"/>
</dbReference>
<dbReference type="PDB" id="4V52">
    <property type="method" value="X-ray"/>
    <property type="resolution" value="3.21 A"/>
    <property type="chains" value="B2/D2=1-46"/>
</dbReference>
<dbReference type="PDB" id="4V53">
    <property type="method" value="X-ray"/>
    <property type="resolution" value="3.54 A"/>
    <property type="chains" value="B2/D2=1-46"/>
</dbReference>
<dbReference type="PDB" id="4V54">
    <property type="method" value="X-ray"/>
    <property type="resolution" value="3.30 A"/>
    <property type="chains" value="B2/D2=1-46"/>
</dbReference>
<dbReference type="PDB" id="4V55">
    <property type="method" value="X-ray"/>
    <property type="resolution" value="4.00 A"/>
    <property type="chains" value="B2/D2=1-46"/>
</dbReference>
<dbReference type="PDB" id="4V56">
    <property type="method" value="X-ray"/>
    <property type="resolution" value="3.93 A"/>
    <property type="chains" value="B2/D2=1-46"/>
</dbReference>
<dbReference type="PDB" id="4V57">
    <property type="method" value="X-ray"/>
    <property type="resolution" value="3.50 A"/>
    <property type="chains" value="B2/D2=1-46"/>
</dbReference>
<dbReference type="PDB" id="4V5B">
    <property type="method" value="X-ray"/>
    <property type="resolution" value="3.74 A"/>
    <property type="chains" value="A2/C2=1-46"/>
</dbReference>
<dbReference type="PDB" id="4V5H">
    <property type="method" value="EM"/>
    <property type="resolution" value="5.80 A"/>
    <property type="chains" value="B6=1-46"/>
</dbReference>
<dbReference type="PDB" id="4V5Y">
    <property type="method" value="X-ray"/>
    <property type="resolution" value="4.45 A"/>
    <property type="chains" value="B2/D2=1-46"/>
</dbReference>
<dbReference type="PDB" id="4V64">
    <property type="method" value="X-ray"/>
    <property type="resolution" value="3.50 A"/>
    <property type="chains" value="B2/D2=1-46"/>
</dbReference>
<dbReference type="PDB" id="4V65">
    <property type="method" value="EM"/>
    <property type="resolution" value="9.00 A"/>
    <property type="chains" value="BV=1-46"/>
</dbReference>
<dbReference type="PDB" id="4V66">
    <property type="method" value="EM"/>
    <property type="resolution" value="9.00 A"/>
    <property type="chains" value="BV=1-46"/>
</dbReference>
<dbReference type="PDB" id="4V69">
    <property type="method" value="EM"/>
    <property type="resolution" value="6.70 A"/>
    <property type="chains" value="B2=1-46"/>
</dbReference>
<dbReference type="PDB" id="4V6C">
    <property type="method" value="X-ray"/>
    <property type="resolution" value="3.19 A"/>
    <property type="chains" value="B2/D2=1-46"/>
</dbReference>
<dbReference type="PDB" id="4V6D">
    <property type="method" value="X-ray"/>
    <property type="resolution" value="3.81 A"/>
    <property type="chains" value="B2/D2=1-46"/>
</dbReference>
<dbReference type="PDB" id="4V6E">
    <property type="method" value="X-ray"/>
    <property type="resolution" value="3.71 A"/>
    <property type="chains" value="B2/D2=1-46"/>
</dbReference>
<dbReference type="PDB" id="4V6K">
    <property type="method" value="EM"/>
    <property type="resolution" value="8.25 A"/>
    <property type="chains" value="Ae=1-46"/>
</dbReference>
<dbReference type="PDB" id="4V6L">
    <property type="method" value="EM"/>
    <property type="resolution" value="13.20 A"/>
    <property type="chains" value="Be=1-46"/>
</dbReference>
<dbReference type="PDB" id="4V6M">
    <property type="method" value="EM"/>
    <property type="resolution" value="7.10 A"/>
    <property type="chains" value="B2=1-46"/>
</dbReference>
<dbReference type="PDB" id="4V6N">
    <property type="method" value="EM"/>
    <property type="resolution" value="12.10 A"/>
    <property type="chains" value="A5=1-46"/>
</dbReference>
<dbReference type="PDB" id="4V6O">
    <property type="method" value="EM"/>
    <property type="resolution" value="14.70 A"/>
    <property type="chains" value="B5=1-46"/>
</dbReference>
<dbReference type="PDB" id="4V6P">
    <property type="method" value="EM"/>
    <property type="resolution" value="13.50 A"/>
    <property type="chains" value="B5=1-46"/>
</dbReference>
<dbReference type="PDB" id="4V6Q">
    <property type="method" value="EM"/>
    <property type="resolution" value="11.50 A"/>
    <property type="chains" value="B5=1-46"/>
</dbReference>
<dbReference type="PDB" id="4V6R">
    <property type="method" value="EM"/>
    <property type="resolution" value="11.50 A"/>
    <property type="chains" value="B5=1-46"/>
</dbReference>
<dbReference type="PDB" id="4V6S">
    <property type="method" value="EM"/>
    <property type="resolution" value="13.10 A"/>
    <property type="chains" value="A5=1-46"/>
</dbReference>
<dbReference type="PDB" id="4V6T">
    <property type="method" value="EM"/>
    <property type="resolution" value="8.30 A"/>
    <property type="chains" value="B2=1-46"/>
</dbReference>
<dbReference type="PDB" id="4V6V">
    <property type="method" value="EM"/>
    <property type="resolution" value="9.80 A"/>
    <property type="chains" value="B7=1-46"/>
</dbReference>
<dbReference type="PDB" id="4V6Y">
    <property type="method" value="EM"/>
    <property type="resolution" value="12.00 A"/>
    <property type="chains" value="B2=1-46"/>
</dbReference>
<dbReference type="PDB" id="4V6Z">
    <property type="method" value="EM"/>
    <property type="resolution" value="12.00 A"/>
    <property type="chains" value="B2=1-46"/>
</dbReference>
<dbReference type="PDB" id="4V70">
    <property type="method" value="EM"/>
    <property type="resolution" value="17.00 A"/>
    <property type="chains" value="B2=1-46"/>
</dbReference>
<dbReference type="PDB" id="4V71">
    <property type="method" value="EM"/>
    <property type="resolution" value="20.00 A"/>
    <property type="chains" value="B2=1-46"/>
</dbReference>
<dbReference type="PDB" id="4V72">
    <property type="method" value="EM"/>
    <property type="resolution" value="13.00 A"/>
    <property type="chains" value="B2=1-46"/>
</dbReference>
<dbReference type="PDB" id="4V73">
    <property type="method" value="EM"/>
    <property type="resolution" value="15.00 A"/>
    <property type="chains" value="B2=1-46"/>
</dbReference>
<dbReference type="PDB" id="4V74">
    <property type="method" value="EM"/>
    <property type="resolution" value="17.00 A"/>
    <property type="chains" value="B2=1-46"/>
</dbReference>
<dbReference type="PDB" id="4V75">
    <property type="method" value="EM"/>
    <property type="resolution" value="12.00 A"/>
    <property type="chains" value="B2=1-46"/>
</dbReference>
<dbReference type="PDB" id="4V76">
    <property type="method" value="EM"/>
    <property type="resolution" value="17.00 A"/>
    <property type="chains" value="B2=1-46"/>
</dbReference>
<dbReference type="PDB" id="4V77">
    <property type="method" value="EM"/>
    <property type="resolution" value="17.00 A"/>
    <property type="chains" value="B2=1-46"/>
</dbReference>
<dbReference type="PDB" id="4V78">
    <property type="method" value="EM"/>
    <property type="resolution" value="20.00 A"/>
    <property type="chains" value="B2=1-46"/>
</dbReference>
<dbReference type="PDB" id="4V79">
    <property type="method" value="EM"/>
    <property type="resolution" value="15.00 A"/>
    <property type="chains" value="B2=1-46"/>
</dbReference>
<dbReference type="PDB" id="4V7A">
    <property type="method" value="EM"/>
    <property type="resolution" value="9.00 A"/>
    <property type="chains" value="B2=1-46"/>
</dbReference>
<dbReference type="PDB" id="4V7B">
    <property type="method" value="EM"/>
    <property type="resolution" value="6.80 A"/>
    <property type="chains" value="B2=1-46"/>
</dbReference>
<dbReference type="PDB" id="4V7C">
    <property type="method" value="EM"/>
    <property type="resolution" value="7.60 A"/>
    <property type="chains" value="B5=1-46"/>
</dbReference>
<dbReference type="PDB" id="4V7D">
    <property type="method" value="EM"/>
    <property type="resolution" value="7.60 A"/>
    <property type="chains" value="A6=1-46"/>
</dbReference>
<dbReference type="PDB" id="4V7I">
    <property type="method" value="EM"/>
    <property type="resolution" value="9.60 A"/>
    <property type="chains" value="A2=1-46"/>
</dbReference>
<dbReference type="PDB" id="4V7S">
    <property type="method" value="X-ray"/>
    <property type="resolution" value="3.25 A"/>
    <property type="chains" value="B2/D2=1-46"/>
</dbReference>
<dbReference type="PDB" id="4V7T">
    <property type="method" value="X-ray"/>
    <property type="resolution" value="3.19 A"/>
    <property type="chains" value="B2/D2=1-46"/>
</dbReference>
<dbReference type="PDB" id="4V7U">
    <property type="method" value="X-ray"/>
    <property type="resolution" value="3.10 A"/>
    <property type="chains" value="B2/D2=1-46"/>
</dbReference>
<dbReference type="PDB" id="4V7V">
    <property type="method" value="X-ray"/>
    <property type="resolution" value="3.29 A"/>
    <property type="chains" value="B2/D2=1-46"/>
</dbReference>
<dbReference type="PDB" id="4V85">
    <property type="method" value="X-ray"/>
    <property type="resolution" value="3.20 A"/>
    <property type="chains" value="B6=1-46"/>
</dbReference>
<dbReference type="PDB" id="4V89">
    <property type="method" value="X-ray"/>
    <property type="resolution" value="3.70 A"/>
    <property type="chains" value="B6=1-46"/>
</dbReference>
<dbReference type="PDB" id="4V9C">
    <property type="method" value="X-ray"/>
    <property type="resolution" value="3.30 A"/>
    <property type="chains" value="B2/D2=1-46"/>
</dbReference>
<dbReference type="PDB" id="4V9D">
    <property type="method" value="X-ray"/>
    <property type="resolution" value="3.00 A"/>
    <property type="chains" value="C2/D2=1-46"/>
</dbReference>
<dbReference type="PDB" id="4V9O">
    <property type="method" value="X-ray"/>
    <property type="resolution" value="2.90 A"/>
    <property type="chains" value="A2/C2/E2/G2=1-46"/>
</dbReference>
<dbReference type="PDB" id="4V9P">
    <property type="method" value="X-ray"/>
    <property type="resolution" value="2.90 A"/>
    <property type="chains" value="A2/C2/E2/G2=1-46"/>
</dbReference>
<dbReference type="PDB" id="4WF1">
    <property type="method" value="X-ray"/>
    <property type="resolution" value="3.09 A"/>
    <property type="chains" value="B2/D2=1-46"/>
</dbReference>
<dbReference type="PDB" id="4WOI">
    <property type="method" value="X-ray"/>
    <property type="resolution" value="3.00 A"/>
    <property type="chains" value="B2/C2=1-46"/>
</dbReference>
<dbReference type="PDB" id="4WWW">
    <property type="method" value="X-ray"/>
    <property type="resolution" value="3.10 A"/>
    <property type="chains" value="R2/Y2=1-46"/>
</dbReference>
<dbReference type="PDB" id="4YBB">
    <property type="method" value="X-ray"/>
    <property type="resolution" value="2.10 A"/>
    <property type="chains" value="C3/D3=1-46"/>
</dbReference>
<dbReference type="PDB" id="5ADY">
    <property type="method" value="EM"/>
    <property type="resolution" value="4.50 A"/>
    <property type="chains" value="2=1-46"/>
</dbReference>
<dbReference type="PDB" id="5AFI">
    <property type="method" value="EM"/>
    <property type="resolution" value="2.90 A"/>
    <property type="chains" value="2=1-46"/>
</dbReference>
<dbReference type="PDB" id="5AKA">
    <property type="method" value="EM"/>
    <property type="resolution" value="5.70 A"/>
    <property type="chains" value="2=1-46"/>
</dbReference>
<dbReference type="PDB" id="5GAD">
    <property type="method" value="EM"/>
    <property type="resolution" value="3.70 A"/>
    <property type="chains" value="d=1-46"/>
</dbReference>
<dbReference type="PDB" id="5GAE">
    <property type="method" value="EM"/>
    <property type="resolution" value="3.33 A"/>
    <property type="chains" value="d=1-46"/>
</dbReference>
<dbReference type="PDB" id="5GAF">
    <property type="method" value="EM"/>
    <property type="resolution" value="4.30 A"/>
    <property type="chains" value="d=1-46"/>
</dbReference>
<dbReference type="PDB" id="5GAG">
    <property type="method" value="EM"/>
    <property type="resolution" value="3.80 A"/>
    <property type="chains" value="d=1-46"/>
</dbReference>
<dbReference type="PDB" id="5GAH">
    <property type="method" value="EM"/>
    <property type="resolution" value="3.80 A"/>
    <property type="chains" value="d=1-46"/>
</dbReference>
<dbReference type="PDB" id="5H5U">
    <property type="method" value="EM"/>
    <property type="resolution" value="3.00 A"/>
    <property type="chains" value="d=1-46"/>
</dbReference>
<dbReference type="PDB" id="5IQR">
    <property type="method" value="EM"/>
    <property type="resolution" value="3.00 A"/>
    <property type="chains" value="d=1-46"/>
</dbReference>
<dbReference type="PDB" id="5IT8">
    <property type="method" value="X-ray"/>
    <property type="resolution" value="3.12 A"/>
    <property type="chains" value="C3/D3=1-46"/>
</dbReference>
<dbReference type="PDB" id="5J5B">
    <property type="method" value="X-ray"/>
    <property type="resolution" value="2.80 A"/>
    <property type="chains" value="C3/D3=1-46"/>
</dbReference>
<dbReference type="PDB" id="5J7L">
    <property type="method" value="X-ray"/>
    <property type="resolution" value="3.00 A"/>
    <property type="chains" value="C3/D3=1-46"/>
</dbReference>
<dbReference type="PDB" id="5J88">
    <property type="method" value="X-ray"/>
    <property type="resolution" value="3.32 A"/>
    <property type="chains" value="C3/D3=1-46"/>
</dbReference>
<dbReference type="PDB" id="5J8A">
    <property type="method" value="X-ray"/>
    <property type="resolution" value="3.10 A"/>
    <property type="chains" value="C3/D3=1-46"/>
</dbReference>
<dbReference type="PDB" id="5J91">
    <property type="method" value="X-ray"/>
    <property type="resolution" value="2.96 A"/>
    <property type="chains" value="C3/D3=1-46"/>
</dbReference>
<dbReference type="PDB" id="5JC9">
    <property type="method" value="X-ray"/>
    <property type="resolution" value="3.03 A"/>
    <property type="chains" value="C3/D3=1-46"/>
</dbReference>
<dbReference type="PDB" id="5JTE">
    <property type="method" value="EM"/>
    <property type="resolution" value="3.60 A"/>
    <property type="chains" value="B2=1-46"/>
</dbReference>
<dbReference type="PDB" id="5JU8">
    <property type="method" value="EM"/>
    <property type="resolution" value="3.60 A"/>
    <property type="chains" value="B2=1-46"/>
</dbReference>
<dbReference type="PDB" id="5KCR">
    <property type="method" value="EM"/>
    <property type="resolution" value="3.60 A"/>
    <property type="chains" value="17=1-46"/>
</dbReference>
<dbReference type="PDB" id="5KCS">
    <property type="method" value="EM"/>
    <property type="resolution" value="3.90 A"/>
    <property type="chains" value="17=1-46"/>
</dbReference>
<dbReference type="PDB" id="5KPS">
    <property type="method" value="EM"/>
    <property type="resolution" value="3.90 A"/>
    <property type="chains" value="4=1-46"/>
</dbReference>
<dbReference type="PDB" id="5KPV">
    <property type="method" value="EM"/>
    <property type="resolution" value="4.10 A"/>
    <property type="chains" value="3=1-46"/>
</dbReference>
<dbReference type="PDB" id="5KPW">
    <property type="method" value="EM"/>
    <property type="resolution" value="3.90 A"/>
    <property type="chains" value="3=1-46"/>
</dbReference>
<dbReference type="PDB" id="5KPX">
    <property type="method" value="EM"/>
    <property type="resolution" value="3.90 A"/>
    <property type="chains" value="3=1-46"/>
</dbReference>
<dbReference type="PDB" id="5L3P">
    <property type="method" value="EM"/>
    <property type="resolution" value="3.70 A"/>
    <property type="chains" value="7=1-46"/>
</dbReference>
<dbReference type="PDB" id="5LZA">
    <property type="method" value="EM"/>
    <property type="resolution" value="3.60 A"/>
    <property type="chains" value="2=1-46"/>
</dbReference>
<dbReference type="PDB" id="5LZB">
    <property type="method" value="EM"/>
    <property type="resolution" value="5.30 A"/>
    <property type="chains" value="2=1-46"/>
</dbReference>
<dbReference type="PDB" id="5LZC">
    <property type="method" value="EM"/>
    <property type="resolution" value="4.80 A"/>
    <property type="chains" value="2=1-46"/>
</dbReference>
<dbReference type="PDB" id="5LZD">
    <property type="method" value="EM"/>
    <property type="resolution" value="3.40 A"/>
    <property type="chains" value="2=1-46"/>
</dbReference>
<dbReference type="PDB" id="5LZE">
    <property type="method" value="EM"/>
    <property type="resolution" value="3.50 A"/>
    <property type="chains" value="2=1-46"/>
</dbReference>
<dbReference type="PDB" id="5LZF">
    <property type="method" value="EM"/>
    <property type="resolution" value="4.60 A"/>
    <property type="chains" value="2=1-46"/>
</dbReference>
<dbReference type="PDB" id="5MDV">
    <property type="method" value="EM"/>
    <property type="resolution" value="2.97 A"/>
    <property type="chains" value="d=1-46"/>
</dbReference>
<dbReference type="PDB" id="5MDW">
    <property type="method" value="EM"/>
    <property type="resolution" value="3.06 A"/>
    <property type="chains" value="d=1-46"/>
</dbReference>
<dbReference type="PDB" id="5MDY">
    <property type="method" value="EM"/>
    <property type="resolution" value="3.35 A"/>
    <property type="chains" value="d=1-46"/>
</dbReference>
<dbReference type="PDB" id="5MDZ">
    <property type="method" value="EM"/>
    <property type="resolution" value="3.10 A"/>
    <property type="chains" value="d=1-46"/>
</dbReference>
<dbReference type="PDB" id="5MGP">
    <property type="method" value="EM"/>
    <property type="resolution" value="3.10 A"/>
    <property type="chains" value="2=1-46"/>
</dbReference>
<dbReference type="PDB" id="5NCO">
    <property type="method" value="EM"/>
    <property type="resolution" value="4.80 A"/>
    <property type="chains" value="d=1-46"/>
</dbReference>
<dbReference type="PDB" id="5NP6">
    <property type="method" value="EM"/>
    <property type="resolution" value="3.60 A"/>
    <property type="chains" value="0=1-46"/>
</dbReference>
<dbReference type="PDB" id="5NWY">
    <property type="method" value="EM"/>
    <property type="resolution" value="2.93 A"/>
    <property type="chains" value="p=1-46"/>
</dbReference>
<dbReference type="PDB" id="5O2R">
    <property type="method" value="EM"/>
    <property type="resolution" value="3.40 A"/>
    <property type="chains" value="2=1-46"/>
</dbReference>
<dbReference type="PDB" id="5U4I">
    <property type="method" value="EM"/>
    <property type="resolution" value="3.50 A"/>
    <property type="chains" value="3=1-46"/>
</dbReference>
<dbReference type="PDB" id="5U9F">
    <property type="method" value="EM"/>
    <property type="resolution" value="3.20 A"/>
    <property type="chains" value="32=1-46"/>
</dbReference>
<dbReference type="PDB" id="5U9G">
    <property type="method" value="EM"/>
    <property type="resolution" value="3.20 A"/>
    <property type="chains" value="32=1-46"/>
</dbReference>
<dbReference type="PDB" id="5UYK">
    <property type="method" value="EM"/>
    <property type="resolution" value="3.90 A"/>
    <property type="chains" value="32=1-46"/>
</dbReference>
<dbReference type="PDB" id="5UYL">
    <property type="method" value="EM"/>
    <property type="resolution" value="3.60 A"/>
    <property type="chains" value="32=1-46"/>
</dbReference>
<dbReference type="PDB" id="5UYM">
    <property type="method" value="EM"/>
    <property type="resolution" value="3.20 A"/>
    <property type="chains" value="32=1-46"/>
</dbReference>
<dbReference type="PDB" id="5UYN">
    <property type="method" value="EM"/>
    <property type="resolution" value="4.00 A"/>
    <property type="chains" value="32=1-46"/>
</dbReference>
<dbReference type="PDB" id="5UYP">
    <property type="method" value="EM"/>
    <property type="resolution" value="3.90 A"/>
    <property type="chains" value="32=1-46"/>
</dbReference>
<dbReference type="PDB" id="5UYQ">
    <property type="method" value="EM"/>
    <property type="resolution" value="3.80 A"/>
    <property type="chains" value="32=1-46"/>
</dbReference>
<dbReference type="PDB" id="5WDT">
    <property type="method" value="EM"/>
    <property type="resolution" value="3.00 A"/>
    <property type="chains" value="2=1-45"/>
</dbReference>
<dbReference type="PDB" id="5WE4">
    <property type="method" value="EM"/>
    <property type="resolution" value="3.10 A"/>
    <property type="chains" value="2=1-45"/>
</dbReference>
<dbReference type="PDB" id="5WE6">
    <property type="method" value="EM"/>
    <property type="resolution" value="3.40 A"/>
    <property type="chains" value="2=1-45"/>
</dbReference>
<dbReference type="PDB" id="5WF0">
    <property type="method" value="EM"/>
    <property type="resolution" value="3.60 A"/>
    <property type="chains" value="2=1-45"/>
</dbReference>
<dbReference type="PDB" id="5WFK">
    <property type="method" value="EM"/>
    <property type="resolution" value="3.40 A"/>
    <property type="chains" value="2=1-45"/>
</dbReference>
<dbReference type="PDB" id="5WFS">
    <property type="method" value="EM"/>
    <property type="resolution" value="3.00 A"/>
    <property type="chains" value="2=1-45"/>
</dbReference>
<dbReference type="PDB" id="6BU8">
    <property type="method" value="EM"/>
    <property type="resolution" value="3.50 A"/>
    <property type="chains" value="32=1-46"/>
</dbReference>
<dbReference type="PDB" id="6BY1">
    <property type="method" value="X-ray"/>
    <property type="resolution" value="3.94 A"/>
    <property type="chains" value="C3/D3=1-46"/>
</dbReference>
<dbReference type="PDB" id="6C4I">
    <property type="method" value="EM"/>
    <property type="resolution" value="3.24 A"/>
    <property type="chains" value="4=1-46"/>
</dbReference>
<dbReference type="PDB" id="6DNC">
    <property type="method" value="EM"/>
    <property type="resolution" value="3.70 A"/>
    <property type="chains" value="HA=1-46"/>
</dbReference>
<dbReference type="PDB" id="6ENF">
    <property type="method" value="EM"/>
    <property type="resolution" value="3.20 A"/>
    <property type="chains" value="2=1-46"/>
</dbReference>
<dbReference type="PDB" id="6ENJ">
    <property type="method" value="EM"/>
    <property type="resolution" value="3.70 A"/>
    <property type="chains" value="2=1-46"/>
</dbReference>
<dbReference type="PDB" id="6ENU">
    <property type="method" value="EM"/>
    <property type="resolution" value="3.10 A"/>
    <property type="chains" value="2=1-46"/>
</dbReference>
<dbReference type="PDB" id="6GBZ">
    <property type="method" value="EM"/>
    <property type="resolution" value="3.80 A"/>
    <property type="chains" value="2=1-46"/>
</dbReference>
<dbReference type="PDB" id="6GC0">
    <property type="method" value="EM"/>
    <property type="resolution" value="3.80 A"/>
    <property type="chains" value="2=1-46"/>
</dbReference>
<dbReference type="PDB" id="6GC4">
    <property type="method" value="EM"/>
    <property type="resolution" value="4.30 A"/>
    <property type="chains" value="2=1-46"/>
</dbReference>
<dbReference type="PDB" id="6GC6">
    <property type="method" value="EM"/>
    <property type="resolution" value="4.30 A"/>
    <property type="chains" value="2=1-46"/>
</dbReference>
<dbReference type="PDB" id="6GC7">
    <property type="method" value="EM"/>
    <property type="resolution" value="4.30 A"/>
    <property type="chains" value="2=1-46"/>
</dbReference>
<dbReference type="PDB" id="6GC8">
    <property type="method" value="EM"/>
    <property type="resolution" value="3.80 A"/>
    <property type="chains" value="2=1-46"/>
</dbReference>
<dbReference type="PDB" id="6GWT">
    <property type="method" value="EM"/>
    <property type="resolution" value="3.80 A"/>
    <property type="chains" value="2=1-46"/>
</dbReference>
<dbReference type="PDB" id="6GXM">
    <property type="method" value="EM"/>
    <property type="resolution" value="3.80 A"/>
    <property type="chains" value="2=1-46"/>
</dbReference>
<dbReference type="PDB" id="6GXN">
    <property type="method" value="EM"/>
    <property type="resolution" value="3.90 A"/>
    <property type="chains" value="2=1-46"/>
</dbReference>
<dbReference type="PDB" id="6GXO">
    <property type="method" value="EM"/>
    <property type="resolution" value="3.90 A"/>
    <property type="chains" value="2=1-46"/>
</dbReference>
<dbReference type="PDB" id="6GXP">
    <property type="method" value="EM"/>
    <property type="resolution" value="4.40 A"/>
    <property type="chains" value="2=1-46"/>
</dbReference>
<dbReference type="PDB" id="6H4N">
    <property type="method" value="EM"/>
    <property type="resolution" value="3.00 A"/>
    <property type="chains" value="2=1-46"/>
</dbReference>
<dbReference type="PDB" id="6H58">
    <property type="method" value="EM"/>
    <property type="resolution" value="7.90 A"/>
    <property type="chains" value="2/22=1-46"/>
</dbReference>
<dbReference type="PDB" id="6HRM">
    <property type="method" value="EM"/>
    <property type="resolution" value="2.96 A"/>
    <property type="chains" value="d=1-46"/>
</dbReference>
<dbReference type="PDB" id="6I0Y">
    <property type="method" value="EM"/>
    <property type="resolution" value="3.20 A"/>
    <property type="chains" value="2=1-46"/>
</dbReference>
<dbReference type="PDB" id="6I7V">
    <property type="method" value="X-ray"/>
    <property type="resolution" value="2.90 A"/>
    <property type="chains" value="C3/D3=1-46"/>
</dbReference>
<dbReference type="PDB" id="6O9J">
    <property type="method" value="EM"/>
    <property type="resolution" value="3.90 A"/>
    <property type="chains" value="3=1-46"/>
</dbReference>
<dbReference type="PDB" id="6O9K">
    <property type="method" value="EM"/>
    <property type="resolution" value="4.00 A"/>
    <property type="chains" value="7=1-46"/>
</dbReference>
<dbReference type="PDB" id="6OFX">
    <property type="method" value="EM"/>
    <property type="resolution" value="3.30 A"/>
    <property type="chains" value="D=1-46"/>
</dbReference>
<dbReference type="PDB" id="6OG7">
    <property type="method" value="EM"/>
    <property type="resolution" value="3.30 A"/>
    <property type="chains" value="D=1-46"/>
</dbReference>
<dbReference type="PDB" id="6OGF">
    <property type="method" value="EM"/>
    <property type="resolution" value="3.90 A"/>
    <property type="chains" value="D=1-46"/>
</dbReference>
<dbReference type="PDB" id="6OGG">
    <property type="method" value="EM"/>
    <property type="resolution" value="4.20 A"/>
    <property type="chains" value="D=1-46"/>
</dbReference>
<dbReference type="PDB" id="6OGI">
    <property type="method" value="EM"/>
    <property type="resolution" value="3.40 A"/>
    <property type="chains" value="D=1-46"/>
</dbReference>
<dbReference type="PDB" id="6OM6">
    <property type="method" value="EM"/>
    <property type="resolution" value="3.10 A"/>
    <property type="chains" value="d=1-46"/>
</dbReference>
<dbReference type="PDB" id="6ORE">
    <property type="method" value="EM"/>
    <property type="resolution" value="2.90 A"/>
    <property type="chains" value="d=1-46"/>
</dbReference>
<dbReference type="PDB" id="6ORL">
    <property type="method" value="EM"/>
    <property type="resolution" value="3.50 A"/>
    <property type="chains" value="d=1-46"/>
</dbReference>
<dbReference type="PDB" id="6OSK">
    <property type="method" value="EM"/>
    <property type="resolution" value="3.60 A"/>
    <property type="chains" value="d=1-46"/>
</dbReference>
<dbReference type="PDB" id="6OSQ">
    <property type="method" value="EM"/>
    <property type="resolution" value="3.50 A"/>
    <property type="chains" value="d=1-46"/>
</dbReference>
<dbReference type="PDB" id="6OST">
    <property type="method" value="EM"/>
    <property type="resolution" value="4.20 A"/>
    <property type="chains" value="d=1-46"/>
</dbReference>
<dbReference type="PDB" id="6OT3">
    <property type="method" value="EM"/>
    <property type="resolution" value="3.90 A"/>
    <property type="chains" value="d=1-46"/>
</dbReference>
<dbReference type="PDB" id="6OUO">
    <property type="method" value="EM"/>
    <property type="resolution" value="3.70 A"/>
    <property type="chains" value="d=1-46"/>
</dbReference>
<dbReference type="PDB" id="6PJ6">
    <property type="method" value="EM"/>
    <property type="resolution" value="2.20 A"/>
    <property type="chains" value="k=1-46"/>
</dbReference>
<dbReference type="PDB" id="6Q97">
    <property type="method" value="EM"/>
    <property type="resolution" value="3.90 A"/>
    <property type="chains" value="d=1-46"/>
</dbReference>
<dbReference type="PDB" id="6Q98">
    <property type="method" value="EM"/>
    <property type="resolution" value="4.30 A"/>
    <property type="chains" value="d=1-46"/>
</dbReference>
<dbReference type="PDB" id="6Q9A">
    <property type="method" value="EM"/>
    <property type="resolution" value="3.70 A"/>
    <property type="chains" value="d=1-45"/>
</dbReference>
<dbReference type="PDB" id="6QDW">
    <property type="method" value="EM"/>
    <property type="resolution" value="2.83 A"/>
    <property type="chains" value="6=1-46"/>
</dbReference>
<dbReference type="PDB" id="6QUL">
    <property type="method" value="EM"/>
    <property type="resolution" value="3.00 A"/>
    <property type="chains" value="d=1-46"/>
</dbReference>
<dbReference type="PDB" id="6S0K">
    <property type="method" value="EM"/>
    <property type="resolution" value="3.10 A"/>
    <property type="chains" value="d=1-46"/>
</dbReference>
<dbReference type="PDB" id="6SZS">
    <property type="method" value="EM"/>
    <property type="resolution" value="3.06 A"/>
    <property type="chains" value="2=1-46"/>
</dbReference>
<dbReference type="PDB" id="6TBV">
    <property type="method" value="EM"/>
    <property type="resolution" value="2.70 A"/>
    <property type="chains" value="L341=1-46"/>
</dbReference>
<dbReference type="PDB" id="6TC3">
    <property type="method" value="EM"/>
    <property type="resolution" value="2.70 A"/>
    <property type="chains" value="L341=1-46"/>
</dbReference>
<dbReference type="PDB" id="6U48">
    <property type="method" value="EM"/>
    <property type="resolution" value="2.87 A"/>
    <property type="chains" value="C3=1-46"/>
</dbReference>
<dbReference type="PDB" id="6VU3">
    <property type="method" value="EM"/>
    <property type="resolution" value="3.70 A"/>
    <property type="chains" value="m=1-46"/>
</dbReference>
<dbReference type="PDB" id="6VWL">
    <property type="method" value="EM"/>
    <property type="resolution" value="3.10 A"/>
    <property type="chains" value="AA=1-46"/>
</dbReference>
<dbReference type="PDB" id="6VWM">
    <property type="method" value="EM"/>
    <property type="resolution" value="3.40 A"/>
    <property type="chains" value="AA=1-46"/>
</dbReference>
<dbReference type="PDB" id="6VWN">
    <property type="method" value="EM"/>
    <property type="resolution" value="3.40 A"/>
    <property type="chains" value="AA=1-46"/>
</dbReference>
<dbReference type="PDB" id="6VYQ">
    <property type="method" value="EM"/>
    <property type="resolution" value="3.70 A"/>
    <property type="chains" value="m=1-46"/>
</dbReference>
<dbReference type="PDB" id="6VYR">
    <property type="method" value="EM"/>
    <property type="resolution" value="3.80 A"/>
    <property type="chains" value="m=1-46"/>
</dbReference>
<dbReference type="PDB" id="6VYS">
    <property type="method" value="EM"/>
    <property type="resolution" value="3.70 A"/>
    <property type="chains" value="m=1-46"/>
</dbReference>
<dbReference type="PDB" id="6VYT">
    <property type="method" value="EM"/>
    <property type="resolution" value="14.00 A"/>
    <property type="chains" value="m=1-46"/>
</dbReference>
<dbReference type="PDB" id="6VYU">
    <property type="method" value="EM"/>
    <property type="resolution" value="7.00 A"/>
    <property type="chains" value="m=1-46"/>
</dbReference>
<dbReference type="PDB" id="6VYW">
    <property type="method" value="EM"/>
    <property type="resolution" value="7.00 A"/>
    <property type="chains" value="m=1-46"/>
</dbReference>
<dbReference type="PDB" id="6VYX">
    <property type="method" value="EM"/>
    <property type="resolution" value="9.90 A"/>
    <property type="chains" value="m=1-46"/>
</dbReference>
<dbReference type="PDB" id="6VYY">
    <property type="method" value="EM"/>
    <property type="resolution" value="9.90 A"/>
    <property type="chains" value="m=1-46"/>
</dbReference>
<dbReference type="PDB" id="6VYZ">
    <property type="method" value="EM"/>
    <property type="resolution" value="9.90 A"/>
    <property type="chains" value="m=1-46"/>
</dbReference>
<dbReference type="PDB" id="6VZ2">
    <property type="method" value="EM"/>
    <property type="resolution" value="10.00 A"/>
    <property type="chains" value="m=1-46"/>
</dbReference>
<dbReference type="PDB" id="6VZ3">
    <property type="method" value="EM"/>
    <property type="resolution" value="8.90 A"/>
    <property type="chains" value="m=1-46"/>
</dbReference>
<dbReference type="PDB" id="6VZ5">
    <property type="method" value="EM"/>
    <property type="resolution" value="8.90 A"/>
    <property type="chains" value="m=1-46"/>
</dbReference>
<dbReference type="PDB" id="6VZ7">
    <property type="method" value="EM"/>
    <property type="resolution" value="7.00 A"/>
    <property type="chains" value="m=1-46"/>
</dbReference>
<dbReference type="PDB" id="6VZJ">
    <property type="method" value="EM"/>
    <property type="resolution" value="4.10 A"/>
    <property type="chains" value="m=1-46"/>
</dbReference>
<dbReference type="PDB" id="6WD0">
    <property type="method" value="EM"/>
    <property type="resolution" value="3.00 A"/>
    <property type="chains" value="D=1-46"/>
</dbReference>
<dbReference type="PDB" id="6WD1">
    <property type="method" value="EM"/>
    <property type="resolution" value="3.30 A"/>
    <property type="chains" value="D=1-46"/>
</dbReference>
<dbReference type="PDB" id="6WD2">
    <property type="method" value="EM"/>
    <property type="resolution" value="3.60 A"/>
    <property type="chains" value="D=1-46"/>
</dbReference>
<dbReference type="PDB" id="6WD3">
    <property type="method" value="EM"/>
    <property type="resolution" value="3.60 A"/>
    <property type="chains" value="D=1-46"/>
</dbReference>
<dbReference type="PDB" id="6WD4">
    <property type="method" value="EM"/>
    <property type="resolution" value="3.70 A"/>
    <property type="chains" value="D=1-46"/>
</dbReference>
<dbReference type="PDB" id="6WD5">
    <property type="method" value="EM"/>
    <property type="resolution" value="3.60 A"/>
    <property type="chains" value="D=1-46"/>
</dbReference>
<dbReference type="PDB" id="6WD6">
    <property type="method" value="EM"/>
    <property type="resolution" value="3.70 A"/>
    <property type="chains" value="D=1-46"/>
</dbReference>
<dbReference type="PDB" id="6WD7">
    <property type="method" value="EM"/>
    <property type="resolution" value="3.90 A"/>
    <property type="chains" value="D=1-46"/>
</dbReference>
<dbReference type="PDB" id="6WD8">
    <property type="method" value="EM"/>
    <property type="resolution" value="3.70 A"/>
    <property type="chains" value="D=1-46"/>
</dbReference>
<dbReference type="PDB" id="6WD9">
    <property type="method" value="EM"/>
    <property type="resolution" value="3.70 A"/>
    <property type="chains" value="D=1-46"/>
</dbReference>
<dbReference type="PDB" id="6WDA">
    <property type="method" value="EM"/>
    <property type="resolution" value="3.80 A"/>
    <property type="chains" value="D=1-46"/>
</dbReference>
<dbReference type="PDB" id="6WDB">
    <property type="method" value="EM"/>
    <property type="resolution" value="4.00 A"/>
    <property type="chains" value="D=1-46"/>
</dbReference>
<dbReference type="PDB" id="6WDC">
    <property type="method" value="EM"/>
    <property type="resolution" value="4.20 A"/>
    <property type="chains" value="D=1-46"/>
</dbReference>
<dbReference type="PDB" id="6WDD">
    <property type="method" value="EM"/>
    <property type="resolution" value="3.20 A"/>
    <property type="chains" value="D=1-46"/>
</dbReference>
<dbReference type="PDB" id="6WDE">
    <property type="method" value="EM"/>
    <property type="resolution" value="3.00 A"/>
    <property type="chains" value="D=1-46"/>
</dbReference>
<dbReference type="PDB" id="6WDF">
    <property type="method" value="EM"/>
    <property type="resolution" value="3.30 A"/>
    <property type="chains" value="D=1-46"/>
</dbReference>
<dbReference type="PDB" id="6WDG">
    <property type="method" value="EM"/>
    <property type="resolution" value="3.30 A"/>
    <property type="chains" value="D=1-46"/>
</dbReference>
<dbReference type="PDB" id="6WDH">
    <property type="method" value="EM"/>
    <property type="resolution" value="4.30 A"/>
    <property type="chains" value="D=1-46"/>
</dbReference>
<dbReference type="PDB" id="6WDI">
    <property type="method" value="EM"/>
    <property type="resolution" value="4.00 A"/>
    <property type="chains" value="D=1-46"/>
</dbReference>
<dbReference type="PDB" id="6WDJ">
    <property type="method" value="EM"/>
    <property type="resolution" value="3.70 A"/>
    <property type="chains" value="D=1-46"/>
</dbReference>
<dbReference type="PDB" id="6WDK">
    <property type="method" value="EM"/>
    <property type="resolution" value="3.60 A"/>
    <property type="chains" value="D=1-46"/>
</dbReference>
<dbReference type="PDB" id="6WDL">
    <property type="method" value="EM"/>
    <property type="resolution" value="3.70 A"/>
    <property type="chains" value="D=1-46"/>
</dbReference>
<dbReference type="PDB" id="6WDM">
    <property type="method" value="EM"/>
    <property type="resolution" value="3.60 A"/>
    <property type="chains" value="D=1-46"/>
</dbReference>
<dbReference type="PDB" id="6WNT">
    <property type="method" value="EM"/>
    <property type="resolution" value="3.10 A"/>
    <property type="chains" value="D=1-46"/>
</dbReference>
<dbReference type="PDB" id="6WNV">
    <property type="method" value="EM"/>
    <property type="resolution" value="3.50 A"/>
    <property type="chains" value="D=1-46"/>
</dbReference>
<dbReference type="PDB" id="6WNW">
    <property type="method" value="EM"/>
    <property type="resolution" value="3.20 A"/>
    <property type="chains" value="D=1-46"/>
</dbReference>
<dbReference type="PDB" id="6X6T">
    <property type="method" value="EM"/>
    <property type="resolution" value="3.20 A"/>
    <property type="chains" value="m=1-46"/>
</dbReference>
<dbReference type="PDB" id="6X7F">
    <property type="method" value="EM"/>
    <property type="resolution" value="3.50 A"/>
    <property type="chains" value="m=1-46"/>
</dbReference>
<dbReference type="PDB" id="6X7K">
    <property type="method" value="EM"/>
    <property type="resolution" value="3.10 A"/>
    <property type="chains" value="m=1-46"/>
</dbReference>
<dbReference type="PDB" id="6X9Q">
    <property type="method" value="EM"/>
    <property type="resolution" value="4.80 A"/>
    <property type="chains" value="m=1-46"/>
</dbReference>
<dbReference type="PDB" id="6XDQ">
    <property type="method" value="EM"/>
    <property type="resolution" value="3.70 A"/>
    <property type="chains" value="m=1-46"/>
</dbReference>
<dbReference type="PDB" id="6XDR">
    <property type="method" value="EM"/>
    <property type="resolution" value="4.70 A"/>
    <property type="chains" value="m=1-46"/>
</dbReference>
<dbReference type="PDB" id="6XGF">
    <property type="method" value="EM"/>
    <property type="resolution" value="5.00 A"/>
    <property type="chains" value="m=1-46"/>
</dbReference>
<dbReference type="PDB" id="6XII">
    <property type="method" value="EM"/>
    <property type="resolution" value="7.00 A"/>
    <property type="chains" value="m=1-46"/>
</dbReference>
<dbReference type="PDB" id="6XIJ">
    <property type="method" value="EM"/>
    <property type="resolution" value="8.00 A"/>
    <property type="chains" value="m=1-46"/>
</dbReference>
<dbReference type="PDB" id="6XZ7">
    <property type="method" value="EM"/>
    <property type="resolution" value="2.10 A"/>
    <property type="chains" value="c=1-46"/>
</dbReference>
<dbReference type="PDB" id="6XZA">
    <property type="method" value="EM"/>
    <property type="resolution" value="2.66 A"/>
    <property type="chains" value="c2=1-46"/>
</dbReference>
<dbReference type="PDB" id="6XZB">
    <property type="method" value="EM"/>
    <property type="resolution" value="2.54 A"/>
    <property type="chains" value="c2=1-46"/>
</dbReference>
<dbReference type="PDB" id="6Y69">
    <property type="method" value="EM"/>
    <property type="resolution" value="2.86 A"/>
    <property type="chains" value="2=1-46"/>
</dbReference>
<dbReference type="PDB" id="6YS3">
    <property type="method" value="EM"/>
    <property type="resolution" value="2.58 A"/>
    <property type="chains" value="6=1-46"/>
</dbReference>
<dbReference type="PDB" id="6YSR">
    <property type="method" value="EM"/>
    <property type="resolution" value="3.10 A"/>
    <property type="chains" value="2=1-46"/>
</dbReference>
<dbReference type="PDB" id="6YSS">
    <property type="method" value="EM"/>
    <property type="resolution" value="2.60 A"/>
    <property type="chains" value="2=1-46"/>
</dbReference>
<dbReference type="PDB" id="6YST">
    <property type="method" value="EM"/>
    <property type="resolution" value="3.20 A"/>
    <property type="chains" value="2=1-46"/>
</dbReference>
<dbReference type="PDB" id="6YSU">
    <property type="method" value="EM"/>
    <property type="resolution" value="3.70 A"/>
    <property type="chains" value="2=1-46"/>
</dbReference>
<dbReference type="PDB" id="6ZTJ">
    <property type="method" value="EM"/>
    <property type="resolution" value="3.40 A"/>
    <property type="chains" value="B4=1-46"/>
</dbReference>
<dbReference type="PDB" id="6ZTL">
    <property type="method" value="EM"/>
    <property type="resolution" value="3.50 A"/>
    <property type="chains" value="B4=1-46"/>
</dbReference>
<dbReference type="PDB" id="6ZTM">
    <property type="method" value="EM"/>
    <property type="resolution" value="3.30 A"/>
    <property type="chains" value="B4=1-46"/>
</dbReference>
<dbReference type="PDB" id="6ZTN">
    <property type="method" value="EM"/>
    <property type="resolution" value="3.90 A"/>
    <property type="chains" value="B4=1-46"/>
</dbReference>
<dbReference type="PDB" id="6ZTO">
    <property type="method" value="EM"/>
    <property type="resolution" value="3.00 A"/>
    <property type="chains" value="B4=1-46"/>
</dbReference>
<dbReference type="PDB" id="6ZTP">
    <property type="method" value="EM"/>
    <property type="resolution" value="3.00 A"/>
    <property type="chains" value="B4=1-46"/>
</dbReference>
<dbReference type="PDB" id="6ZU1">
    <property type="method" value="EM"/>
    <property type="resolution" value="3.00 A"/>
    <property type="chains" value="B4=1-46"/>
</dbReference>
<dbReference type="PDB" id="7ABZ">
    <property type="method" value="EM"/>
    <property type="resolution" value="3.21 A"/>
    <property type="chains" value="d=1-46"/>
</dbReference>
<dbReference type="PDB" id="7AC7">
    <property type="method" value="EM"/>
    <property type="resolution" value="3.08 A"/>
    <property type="chains" value="d=1-46"/>
</dbReference>
<dbReference type="PDB" id="7ACJ">
    <property type="method" value="EM"/>
    <property type="resolution" value="3.20 A"/>
    <property type="chains" value="d=1-46"/>
</dbReference>
<dbReference type="PDB" id="7ACR">
    <property type="method" value="EM"/>
    <property type="resolution" value="3.44 A"/>
    <property type="chains" value="d=1-46"/>
</dbReference>
<dbReference type="PDB" id="7B5K">
    <property type="method" value="EM"/>
    <property type="resolution" value="2.90 A"/>
    <property type="chains" value="2=1-46"/>
</dbReference>
<dbReference type="PDB" id="7BL2">
    <property type="method" value="EM"/>
    <property type="resolution" value="3.70 A"/>
    <property type="chains" value="2=1-46"/>
</dbReference>
<dbReference type="PDB" id="7BL3">
    <property type="method" value="EM"/>
    <property type="resolution" value="3.50 A"/>
    <property type="chains" value="2=1-46"/>
</dbReference>
<dbReference type="PDB" id="7BL4">
    <property type="method" value="EM"/>
    <property type="resolution" value="2.40 A"/>
    <property type="chains" value="2=1-46"/>
</dbReference>
<dbReference type="PDB" id="7BL5">
    <property type="method" value="EM"/>
    <property type="resolution" value="3.30 A"/>
    <property type="chains" value="2=1-46"/>
</dbReference>
<dbReference type="PDB" id="7BL6">
    <property type="method" value="EM"/>
    <property type="resolution" value="4.00 A"/>
    <property type="chains" value="2=1-46"/>
</dbReference>
<dbReference type="PDB" id="7BV8">
    <property type="method" value="EM"/>
    <property type="resolution" value="3.14 A"/>
    <property type="chains" value="d=1-46"/>
</dbReference>
<dbReference type="PDB" id="7D6Z">
    <property type="method" value="EM"/>
    <property type="resolution" value="3.40 A"/>
    <property type="chains" value="c=1-46"/>
</dbReference>
<dbReference type="PDB" id="7D80">
    <property type="method" value="EM"/>
    <property type="resolution" value="4.10 A"/>
    <property type="chains" value="0=1-46"/>
</dbReference>
<dbReference type="PDB" id="7JSS">
    <property type="method" value="EM"/>
    <property type="resolution" value="3.70 A"/>
    <property type="chains" value="D=1-46"/>
</dbReference>
<dbReference type="PDB" id="7JSW">
    <property type="method" value="EM"/>
    <property type="resolution" value="3.80 A"/>
    <property type="chains" value="D=1-46"/>
</dbReference>
<dbReference type="PDB" id="7JSZ">
    <property type="method" value="EM"/>
    <property type="resolution" value="3.70 A"/>
    <property type="chains" value="D=1-46"/>
</dbReference>
<dbReference type="PDB" id="7JT1">
    <property type="method" value="EM"/>
    <property type="resolution" value="3.30 A"/>
    <property type="chains" value="D=1-46"/>
</dbReference>
<dbReference type="PDB" id="7JT2">
    <property type="method" value="EM"/>
    <property type="resolution" value="3.50 A"/>
    <property type="chains" value="D=1-46"/>
</dbReference>
<dbReference type="PDB" id="7JT3">
    <property type="method" value="EM"/>
    <property type="resolution" value="3.70 A"/>
    <property type="chains" value="D=1-46"/>
</dbReference>
<dbReference type="PDB" id="7K00">
    <property type="method" value="EM"/>
    <property type="resolution" value="1.98 A"/>
    <property type="chains" value="1=1-46"/>
</dbReference>
<dbReference type="PDB" id="7K50">
    <property type="method" value="EM"/>
    <property type="resolution" value="3.40 A"/>
    <property type="chains" value="D=1-46"/>
</dbReference>
<dbReference type="PDB" id="7K51">
    <property type="method" value="EM"/>
    <property type="resolution" value="3.50 A"/>
    <property type="chains" value="D=1-46"/>
</dbReference>
<dbReference type="PDB" id="7K52">
    <property type="method" value="EM"/>
    <property type="resolution" value="3.40 A"/>
    <property type="chains" value="D=1-46"/>
</dbReference>
<dbReference type="PDB" id="7K53">
    <property type="method" value="EM"/>
    <property type="resolution" value="3.20 A"/>
    <property type="chains" value="D=1-46"/>
</dbReference>
<dbReference type="PDB" id="7K54">
    <property type="method" value="EM"/>
    <property type="resolution" value="3.20 A"/>
    <property type="chains" value="D=1-46"/>
</dbReference>
<dbReference type="PDB" id="7K55">
    <property type="method" value="EM"/>
    <property type="resolution" value="3.30 A"/>
    <property type="chains" value="D=1-46"/>
</dbReference>
<dbReference type="PDB" id="7LV0">
    <property type="method" value="EM"/>
    <property type="resolution" value="3.20 A"/>
    <property type="chains" value="D=1-46"/>
</dbReference>
<dbReference type="PDB" id="7LVK">
    <property type="method" value="EM"/>
    <property type="resolution" value="2.20 A"/>
    <property type="chains" value="k=1-46"/>
</dbReference>
<dbReference type="PDB" id="7M5D">
    <property type="method" value="EM"/>
    <property type="resolution" value="2.80 A"/>
    <property type="chains" value="d=1-46"/>
</dbReference>
<dbReference type="PDB" id="7N1P">
    <property type="method" value="EM"/>
    <property type="resolution" value="2.33 A"/>
    <property type="chains" value="Lh=1-46"/>
</dbReference>
<dbReference type="PDB" id="7N2C">
    <property type="method" value="EM"/>
    <property type="resolution" value="2.72 A"/>
    <property type="chains" value="Lh=1-46"/>
</dbReference>
<dbReference type="PDB" id="7N2U">
    <property type="method" value="EM"/>
    <property type="resolution" value="2.53 A"/>
    <property type="chains" value="Lh=1-46"/>
</dbReference>
<dbReference type="PDB" id="7N2V">
    <property type="method" value="EM"/>
    <property type="resolution" value="2.54 A"/>
    <property type="chains" value="Lh=1-46"/>
</dbReference>
<dbReference type="PDB" id="7N30">
    <property type="method" value="EM"/>
    <property type="resolution" value="2.66 A"/>
    <property type="chains" value="Lh=1-46"/>
</dbReference>
<dbReference type="PDB" id="7N31">
    <property type="method" value="EM"/>
    <property type="resolution" value="2.69 A"/>
    <property type="chains" value="Lh=1-46"/>
</dbReference>
<dbReference type="PDB" id="7NBU">
    <property type="method" value="EM"/>
    <property type="resolution" value="3.11 A"/>
    <property type="chains" value="1=1-46"/>
</dbReference>
<dbReference type="PDB" id="7NSO">
    <property type="method" value="EM"/>
    <property type="resolution" value="2.90 A"/>
    <property type="chains" value="2=1-46"/>
</dbReference>
<dbReference type="PDB" id="7NSP">
    <property type="method" value="EM"/>
    <property type="resolution" value="3.50 A"/>
    <property type="chains" value="2=1-46"/>
</dbReference>
<dbReference type="PDB" id="7NSQ">
    <property type="method" value="EM"/>
    <property type="resolution" value="3.10 A"/>
    <property type="chains" value="2=1-46"/>
</dbReference>
<dbReference type="PDB" id="7NWT">
    <property type="method" value="EM"/>
    <property type="resolution" value="2.66 A"/>
    <property type="chains" value="d=1-46"/>
</dbReference>
<dbReference type="PDB" id="7NWW">
    <property type="method" value="EM"/>
    <property type="resolution" value="3.05 A"/>
    <property type="chains" value="c=1-46"/>
</dbReference>
<dbReference type="PDB" id="7O19">
    <property type="method" value="EM"/>
    <property type="resolution" value="2.90 A"/>
    <property type="chains" value="B2=1-46"/>
</dbReference>
<dbReference type="PDB" id="7O1A">
    <property type="method" value="EM"/>
    <property type="resolution" value="2.40 A"/>
    <property type="chains" value="B2=1-46"/>
</dbReference>
<dbReference type="PDB" id="7O1C">
    <property type="method" value="EM"/>
    <property type="resolution" value="2.60 A"/>
    <property type="chains" value="B2=1-46"/>
</dbReference>
<dbReference type="PDB" id="7ODE">
    <property type="method" value="EM"/>
    <property type="resolution" value="2.84 A"/>
    <property type="chains" value="k=1-46"/>
</dbReference>
<dbReference type="PDB" id="7OIF">
    <property type="method" value="EM"/>
    <property type="resolution" value="3.00 A"/>
    <property type="chains" value="c=1-46"/>
</dbReference>
<dbReference type="PDB" id="7OIG">
    <property type="method" value="EM"/>
    <property type="resolution" value="3.20 A"/>
    <property type="chains" value="c=1-46"/>
</dbReference>
<dbReference type="PDB" id="7OII">
    <property type="method" value="EM"/>
    <property type="resolution" value="3.00 A"/>
    <property type="chains" value="c=1-46"/>
</dbReference>
<dbReference type="PDB" id="7OIZ">
    <property type="method" value="EM"/>
    <property type="resolution" value="2.90 A"/>
    <property type="chains" value="1=1-46"/>
</dbReference>
<dbReference type="PDB" id="7OJ0">
    <property type="method" value="EM"/>
    <property type="resolution" value="3.50 A"/>
    <property type="chains" value="1=1-46"/>
</dbReference>
<dbReference type="PDB" id="7OT5">
    <property type="method" value="EM"/>
    <property type="resolution" value="2.90 A"/>
    <property type="chains" value="c=1-46"/>
</dbReference>
<dbReference type="PDB" id="7P3K">
    <property type="method" value="EM"/>
    <property type="resolution" value="2.90 A"/>
    <property type="chains" value="1=1-46"/>
</dbReference>
<dbReference type="PDB" id="7PJS">
    <property type="method" value="EM"/>
    <property type="resolution" value="2.35 A"/>
    <property type="chains" value="2=1-46"/>
</dbReference>
<dbReference type="PDB" id="7PJT">
    <property type="method" value="EM"/>
    <property type="resolution" value="6.00 A"/>
    <property type="chains" value="2=1-46"/>
</dbReference>
<dbReference type="PDB" id="7PJU">
    <property type="method" value="EM"/>
    <property type="resolution" value="9.50 A"/>
    <property type="chains" value="2=1-46"/>
</dbReference>
<dbReference type="PDB" id="7PJV">
    <property type="method" value="EM"/>
    <property type="resolution" value="3.10 A"/>
    <property type="chains" value="2=1-46"/>
</dbReference>
<dbReference type="PDB" id="7PJW">
    <property type="method" value="EM"/>
    <property type="resolution" value="4.00 A"/>
    <property type="chains" value="2=1-46"/>
</dbReference>
<dbReference type="PDB" id="7PJX">
    <property type="method" value="EM"/>
    <property type="resolution" value="6.50 A"/>
    <property type="chains" value="2=1-46"/>
</dbReference>
<dbReference type="PDB" id="7PJY">
    <property type="method" value="EM"/>
    <property type="resolution" value="3.10 A"/>
    <property type="chains" value="2=1-46"/>
</dbReference>
<dbReference type="PDB" id="7PJZ">
    <property type="method" value="EM"/>
    <property type="resolution" value="6.00 A"/>
    <property type="chains" value="2=1-46"/>
</dbReference>
<dbReference type="PDB" id="7Q4K">
    <property type="method" value="EM"/>
    <property type="resolution" value="3.00 A"/>
    <property type="chains" value="B2=1-46"/>
</dbReference>
<dbReference type="PDB" id="7QG8">
    <property type="method" value="EM"/>
    <property type="resolution" value="3.97 A"/>
    <property type="chains" value="p=1-46"/>
</dbReference>
<dbReference type="PDB" id="7QGN">
    <property type="method" value="EM"/>
    <property type="resolution" value="3.37 A"/>
    <property type="chains" value="p=1-46"/>
</dbReference>
<dbReference type="PDB" id="7QGR">
    <property type="method" value="EM"/>
    <property type="resolution" value="5.70 A"/>
    <property type="chains" value="p=1-46"/>
</dbReference>
<dbReference type="PDB" id="7QQ3">
    <property type="method" value="EM"/>
    <property type="resolution" value="2.10 A"/>
    <property type="chains" value="k=1-46"/>
</dbReference>
<dbReference type="PDB" id="7S1G">
    <property type="method" value="EM"/>
    <property type="resolution" value="2.48 A"/>
    <property type="chains" value="k=1-46"/>
</dbReference>
<dbReference type="PDB" id="7S1H">
    <property type="method" value="EM"/>
    <property type="resolution" value="2.35 A"/>
    <property type="chains" value="k=1-46"/>
</dbReference>
<dbReference type="PDB" id="7S1I">
    <property type="method" value="EM"/>
    <property type="resolution" value="2.48 A"/>
    <property type="chains" value="k=1-46"/>
</dbReference>
<dbReference type="PDB" id="7S1J">
    <property type="method" value="EM"/>
    <property type="resolution" value="2.47 A"/>
    <property type="chains" value="k=1-46"/>
</dbReference>
<dbReference type="PDB" id="7S1K">
    <property type="method" value="EM"/>
    <property type="resolution" value="2.42 A"/>
    <property type="chains" value="k=1-46"/>
</dbReference>
<dbReference type="PDB" id="7SA4">
    <property type="method" value="EM"/>
    <property type="resolution" value="2.55 A"/>
    <property type="chains" value="d=1-46"/>
</dbReference>
<dbReference type="PDB" id="7SS9">
    <property type="method" value="EM"/>
    <property type="resolution" value="3.90 A"/>
    <property type="chains" value="D=1-46"/>
</dbReference>
<dbReference type="PDB" id="7SSD">
    <property type="method" value="EM"/>
    <property type="resolution" value="3.30 A"/>
    <property type="chains" value="D=1-46"/>
</dbReference>
<dbReference type="PDB" id="7SSL">
    <property type="method" value="EM"/>
    <property type="resolution" value="3.80 A"/>
    <property type="chains" value="D=1-46"/>
</dbReference>
<dbReference type="PDB" id="7SSN">
    <property type="method" value="EM"/>
    <property type="resolution" value="3.20 A"/>
    <property type="chains" value="D=1-46"/>
</dbReference>
<dbReference type="PDB" id="7SSO">
    <property type="method" value="EM"/>
    <property type="resolution" value="3.20 A"/>
    <property type="chains" value="D=1-46"/>
</dbReference>
<dbReference type="PDB" id="7SSW">
    <property type="method" value="EM"/>
    <property type="resolution" value="3.80 A"/>
    <property type="chains" value="D=1-46"/>
</dbReference>
<dbReference type="PDB" id="7ST2">
    <property type="method" value="EM"/>
    <property type="resolution" value="2.90 A"/>
    <property type="chains" value="D=1-46"/>
</dbReference>
<dbReference type="PDB" id="7ST6">
    <property type="method" value="EM"/>
    <property type="resolution" value="3.00 A"/>
    <property type="chains" value="D=1-46"/>
</dbReference>
<dbReference type="PDB" id="7ST7">
    <property type="method" value="EM"/>
    <property type="resolution" value="3.20 A"/>
    <property type="chains" value="D=1-46"/>
</dbReference>
<dbReference type="PDB" id="7TOS">
    <property type="method" value="EM"/>
    <property type="resolution" value="2.90 A"/>
    <property type="chains" value="L34=1-46"/>
</dbReference>
<dbReference type="PDB" id="7UG7">
    <property type="method" value="EM"/>
    <property type="resolution" value="2.58 A"/>
    <property type="chains" value="Lh=1-46"/>
</dbReference>
<dbReference type="PDB" id="7UPH">
    <property type="method" value="EM"/>
    <property type="resolution" value="4.18 A"/>
    <property type="chains" value="k=1-46"/>
</dbReference>
<dbReference type="PDB" id="7Y7C">
    <property type="method" value="EM"/>
    <property type="resolution" value="2.51 A"/>
    <property type="chains" value="1=1-46"/>
</dbReference>
<dbReference type="PDB" id="7Y7D">
    <property type="method" value="EM"/>
    <property type="resolution" value="2.58 A"/>
    <property type="chains" value="1=1-46"/>
</dbReference>
<dbReference type="PDB" id="7Y7E">
    <property type="method" value="EM"/>
    <property type="resolution" value="2.41 A"/>
    <property type="chains" value="1=1-46"/>
</dbReference>
<dbReference type="PDB" id="7Y7F">
    <property type="method" value="EM"/>
    <property type="resolution" value="2.43 A"/>
    <property type="chains" value="1=1-46"/>
</dbReference>
<dbReference type="PDB" id="7Y7G">
    <property type="method" value="EM"/>
    <property type="resolution" value="2.34 A"/>
    <property type="chains" value="1=1-46"/>
</dbReference>
<dbReference type="PDB" id="7Y7H">
    <property type="method" value="EM"/>
    <property type="resolution" value="2.51 A"/>
    <property type="chains" value="1=1-46"/>
</dbReference>
<dbReference type="PDB" id="7YLA">
    <property type="method" value="EM"/>
    <property type="resolution" value="2.52 A"/>
    <property type="chains" value="k=1-46"/>
</dbReference>
<dbReference type="PDB" id="7Z20">
    <property type="method" value="EM"/>
    <property type="resolution" value="2.29 A"/>
    <property type="chains" value="6=1-46"/>
</dbReference>
<dbReference type="PDB" id="7ZOD">
    <property type="method" value="EM"/>
    <property type="resolution" value="2.56 A"/>
    <property type="chains" value="6=1-46"/>
</dbReference>
<dbReference type="PDB" id="7ZP8">
    <property type="method" value="EM"/>
    <property type="resolution" value="2.20 A"/>
    <property type="chains" value="6=1-46"/>
</dbReference>
<dbReference type="PDB" id="7ZQ5">
    <property type="method" value="EM"/>
    <property type="resolution" value="2.70 A"/>
    <property type="chains" value="6=1-46"/>
</dbReference>
<dbReference type="PDB" id="7ZQ6">
    <property type="method" value="EM"/>
    <property type="resolution" value="2.75 A"/>
    <property type="chains" value="6=1-46"/>
</dbReference>
<dbReference type="PDB" id="7ZTA">
    <property type="method" value="EM"/>
    <property type="resolution" value="2.70 A"/>
    <property type="chains" value="L341=1-46"/>
</dbReference>
<dbReference type="PDB" id="8A3L">
    <property type="method" value="EM"/>
    <property type="resolution" value="3.42 A"/>
    <property type="chains" value="1=1-46"/>
</dbReference>
<dbReference type="PDB" id="8AKN">
    <property type="method" value="EM"/>
    <property type="resolution" value="2.30 A"/>
    <property type="chains" value="1=1-46"/>
</dbReference>
<dbReference type="PDB" id="8AM9">
    <property type="method" value="EM"/>
    <property type="resolution" value="2.80 A"/>
    <property type="chains" value="1=1-46"/>
</dbReference>
<dbReference type="PDB" id="8ANA">
    <property type="method" value="EM"/>
    <property type="resolution" value="2.10 A"/>
    <property type="chains" value="1=1-46"/>
</dbReference>
<dbReference type="PDB" id="8AP4">
    <property type="method" value="EM"/>
    <property type="resolution" value="3.00 A"/>
    <property type="chains" value="1=1-46"/>
</dbReference>
<dbReference type="PDB" id="8AYE">
    <property type="method" value="EM"/>
    <property type="resolution" value="1.96 A"/>
    <property type="chains" value="1=1-46"/>
</dbReference>
<dbReference type="PDB" id="8B0X">
    <property type="method" value="EM"/>
    <property type="resolution" value="1.55 A"/>
    <property type="chains" value="1=1-46"/>
</dbReference>
<dbReference type="PDB" id="8B7Y">
    <property type="method" value="EM"/>
    <property type="resolution" value="3.00 A"/>
    <property type="chains" value="k=1-46"/>
</dbReference>
<dbReference type="PDB" id="8BF7">
    <property type="method" value="EM"/>
    <property type="resolution" value="2.33 A"/>
    <property type="chains" value="c=1-46"/>
</dbReference>
<dbReference type="PDB" id="8BGE">
    <property type="method" value="EM"/>
    <property type="resolution" value="2.11 A"/>
    <property type="chains" value="c=1-46"/>
</dbReference>
<dbReference type="PDB" id="8BGH">
    <property type="method" value="EM"/>
    <property type="resolution" value="2.88 A"/>
    <property type="chains" value="c=1-46"/>
</dbReference>
<dbReference type="PDB" id="8BH4">
    <property type="method" value="EM"/>
    <property type="resolution" value="2.62 A"/>
    <property type="chains" value="c=1-46"/>
</dbReference>
<dbReference type="PDB" id="8BHJ">
    <property type="method" value="EM"/>
    <property type="resolution" value="2.81 A"/>
    <property type="chains" value="c=1-46"/>
</dbReference>
<dbReference type="PDB" id="8BHL">
    <property type="method" value="EM"/>
    <property type="resolution" value="2.21 A"/>
    <property type="chains" value="c=1-46"/>
</dbReference>
<dbReference type="PDB" id="8BHN">
    <property type="method" value="EM"/>
    <property type="resolution" value="2.85 A"/>
    <property type="chains" value="c=1-46"/>
</dbReference>
<dbReference type="PDB" id="8BHP">
    <property type="method" value="EM"/>
    <property type="resolution" value="2.37 A"/>
    <property type="chains" value="c=1-46"/>
</dbReference>
<dbReference type="PDB" id="8BIL">
    <property type="method" value="EM"/>
    <property type="resolution" value="2.04 A"/>
    <property type="chains" value="c=1-46"/>
</dbReference>
<dbReference type="PDB" id="8BIM">
    <property type="method" value="EM"/>
    <property type="resolution" value="2.04 A"/>
    <property type="chains" value="c=1-46"/>
</dbReference>
<dbReference type="PDB" id="8C8X">
    <property type="method" value="EM"/>
    <property type="resolution" value="3.93 A"/>
    <property type="chains" value="2=1-46"/>
</dbReference>
<dbReference type="PDB" id="8C8Y">
    <property type="method" value="EM"/>
    <property type="resolution" value="3.03 A"/>
    <property type="chains" value="2=1-46"/>
</dbReference>
<dbReference type="PDB" id="8C8Z">
    <property type="method" value="EM"/>
    <property type="resolution" value="3.12 A"/>
    <property type="chains" value="2=1-46"/>
</dbReference>
<dbReference type="PDB" id="8C90">
    <property type="method" value="EM"/>
    <property type="resolution" value="3.15 A"/>
    <property type="chains" value="2=1-46"/>
</dbReference>
<dbReference type="PDB" id="8C91">
    <property type="method" value="EM"/>
    <property type="resolution" value="4.19 A"/>
    <property type="chains" value="2=1-46"/>
</dbReference>
<dbReference type="PDB" id="8C92">
    <property type="method" value="EM"/>
    <property type="resolution" value="3.79 A"/>
    <property type="chains" value="2=1-46"/>
</dbReference>
<dbReference type="PDB" id="8C93">
    <property type="method" value="EM"/>
    <property type="resolution" value="4.17 A"/>
    <property type="chains" value="2=1-46"/>
</dbReference>
<dbReference type="PDB" id="8C94">
    <property type="method" value="EM"/>
    <property type="resolution" value="3.80 A"/>
    <property type="chains" value="2=1-46"/>
</dbReference>
<dbReference type="PDB" id="8C95">
    <property type="method" value="EM"/>
    <property type="resolution" value="4.92 A"/>
    <property type="chains" value="2=1-46"/>
</dbReference>
<dbReference type="PDB" id="8C96">
    <property type="method" value="EM"/>
    <property type="resolution" value="4.43 A"/>
    <property type="chains" value="2=1-46"/>
</dbReference>
<dbReference type="PDB" id="8C97">
    <property type="method" value="EM"/>
    <property type="resolution" value="4.07 A"/>
    <property type="chains" value="2=1-46"/>
</dbReference>
<dbReference type="PDB" id="8C98">
    <property type="method" value="EM"/>
    <property type="resolution" value="3.66 A"/>
    <property type="chains" value="2=1-46"/>
</dbReference>
<dbReference type="PDB" id="8C99">
    <property type="method" value="EM"/>
    <property type="resolution" value="3.29 A"/>
    <property type="chains" value="2=1-46"/>
</dbReference>
<dbReference type="PDB" id="8C9A">
    <property type="method" value="EM"/>
    <property type="resolution" value="4.86 A"/>
    <property type="chains" value="2=1-46"/>
</dbReference>
<dbReference type="PDB" id="8C9B">
    <property type="method" value="EM"/>
    <property type="resolution" value="5.90 A"/>
    <property type="chains" value="2=1-46"/>
</dbReference>
<dbReference type="PDB" id="8CAM">
    <property type="method" value="EM"/>
    <property type="resolution" value="1.86 A"/>
    <property type="chains" value="1=1-46"/>
</dbReference>
<dbReference type="PDB" id="8CEU">
    <property type="method" value="EM"/>
    <property type="resolution" value="1.83 A"/>
    <property type="chains" value="1=1-46"/>
</dbReference>
<dbReference type="PDB" id="8CGD">
    <property type="method" value="EM"/>
    <property type="resolution" value="1.98 A"/>
    <property type="chains" value="1=1-46"/>
</dbReference>
<dbReference type="PDB" id="8CGK">
    <property type="method" value="EM"/>
    <property type="resolution" value="1.64 A"/>
    <property type="chains" value="1=1-46"/>
</dbReference>
<dbReference type="PDB" id="8CGV">
    <property type="method" value="EM"/>
    <property type="resolution" value="1.66 A"/>
    <property type="chains" value="1=1-46"/>
</dbReference>
<dbReference type="PDB" id="8E30">
    <property type="method" value="EM"/>
    <property type="resolution" value="1.91 A"/>
    <property type="chains" value="R=1-46"/>
</dbReference>
<dbReference type="PDB" id="8E32">
    <property type="method" value="EM"/>
    <property type="resolution" value="2.35 A"/>
    <property type="chains" value="R=1-46"/>
</dbReference>
<dbReference type="PDB" id="8E33">
    <property type="method" value="EM"/>
    <property type="resolution" value="2.23 A"/>
    <property type="chains" value="R=1-46"/>
</dbReference>
<dbReference type="PDB" id="8E35">
    <property type="method" value="EM"/>
    <property type="resolution" value="2.27 A"/>
    <property type="chains" value="R=1-46"/>
</dbReference>
<dbReference type="PDB" id="8E36">
    <property type="method" value="EM"/>
    <property type="resolution" value="2.38 A"/>
    <property type="chains" value="R=1-46"/>
</dbReference>
<dbReference type="PDB" id="8E3L">
    <property type="method" value="EM"/>
    <property type="resolution" value="2.35 A"/>
    <property type="chains" value="R=1-46"/>
</dbReference>
<dbReference type="PDB" id="8E3M">
    <property type="method" value="EM"/>
    <property type="resolution" value="2.25 A"/>
    <property type="chains" value="R=1-46"/>
</dbReference>
<dbReference type="PDB" id="8E3O">
    <property type="method" value="EM"/>
    <property type="resolution" value="1.99 A"/>
    <property type="chains" value="R=1-46"/>
</dbReference>
<dbReference type="PDB" id="8E41">
    <property type="method" value="EM"/>
    <property type="resolution" value="2.13 A"/>
    <property type="chains" value="R=1-46"/>
</dbReference>
<dbReference type="PDB" id="8E42">
    <property type="method" value="EM"/>
    <property type="resolution" value="2.29 A"/>
    <property type="chains" value="R=1-46"/>
</dbReference>
<dbReference type="PDB" id="8E43">
    <property type="method" value="EM"/>
    <property type="resolution" value="2.09 A"/>
    <property type="chains" value="R=1-46"/>
</dbReference>
<dbReference type="PDB" id="8E44">
    <property type="method" value="EM"/>
    <property type="resolution" value="2.53 A"/>
    <property type="chains" value="R=1-46"/>
</dbReference>
<dbReference type="PDB" id="8E45">
    <property type="method" value="EM"/>
    <property type="resolution" value="2.30 A"/>
    <property type="chains" value="R=1-46"/>
</dbReference>
<dbReference type="PDB" id="8E46">
    <property type="method" value="EM"/>
    <property type="resolution" value="2.32 A"/>
    <property type="chains" value="R=1-46"/>
</dbReference>
<dbReference type="PDB" id="8E47">
    <property type="method" value="EM"/>
    <property type="resolution" value="2.32 A"/>
    <property type="chains" value="R=1-46"/>
</dbReference>
<dbReference type="PDB" id="8E48">
    <property type="method" value="EM"/>
    <property type="resolution" value="2.27 A"/>
    <property type="chains" value="R=1-46"/>
</dbReference>
<dbReference type="PDB" id="8E49">
    <property type="method" value="EM"/>
    <property type="resolution" value="2.05 A"/>
    <property type="chains" value="R=1-46"/>
</dbReference>
<dbReference type="PDB" id="8EIU">
    <property type="method" value="EM"/>
    <property type="resolution" value="2.24 A"/>
    <property type="chains" value="1=1-46"/>
</dbReference>
<dbReference type="PDB" id="8EKC">
    <property type="method" value="EM"/>
    <property type="resolution" value="2.70 A"/>
    <property type="chains" value="6=1-46"/>
</dbReference>
<dbReference type="PDB" id="8EMM">
    <property type="method" value="EM"/>
    <property type="resolution" value="2.10 A"/>
    <property type="chains" value="1=1-46"/>
</dbReference>
<dbReference type="PDB" id="8FIZ">
    <property type="method" value="EM"/>
    <property type="resolution" value="3.80 A"/>
    <property type="chains" value="BN=1-46"/>
</dbReference>
<dbReference type="PDB" id="8FTO">
    <property type="method" value="EM"/>
    <property type="resolution" value="1.85 A"/>
    <property type="chains" value="1=1-46"/>
</dbReference>
<dbReference type="PDB" id="8FZD">
    <property type="method" value="EM"/>
    <property type="resolution" value="3.10 A"/>
    <property type="chains" value="6=1-46"/>
</dbReference>
<dbReference type="PDB" id="8FZE">
    <property type="method" value="EM"/>
    <property type="resolution" value="3.00 A"/>
    <property type="chains" value="6=1-46"/>
</dbReference>
<dbReference type="PDB" id="8FZF">
    <property type="method" value="EM"/>
    <property type="resolution" value="3.20 A"/>
    <property type="chains" value="6=1-46"/>
</dbReference>
<dbReference type="PDB" id="8FZG">
    <property type="method" value="EM"/>
    <property type="resolution" value="3.10 A"/>
    <property type="chains" value="6=1-46"/>
</dbReference>
<dbReference type="PDB" id="8FZH">
    <property type="method" value="EM"/>
    <property type="resolution" value="2.90 A"/>
    <property type="chains" value="6=1-46"/>
</dbReference>
<dbReference type="PDB" id="8FZI">
    <property type="method" value="EM"/>
    <property type="resolution" value="3.10 A"/>
    <property type="chains" value="6=1-46"/>
</dbReference>
<dbReference type="PDB" id="8FZJ">
    <property type="method" value="EM"/>
    <property type="resolution" value="3.00 A"/>
    <property type="chains" value="6=1-46"/>
</dbReference>
<dbReference type="PDB" id="8G2U">
    <property type="method" value="EM"/>
    <property type="resolution" value="3.00 A"/>
    <property type="chains" value="2=1-46"/>
</dbReference>
<dbReference type="PDB" id="8G31">
    <property type="method" value="EM"/>
    <property type="resolution" value="3.20 A"/>
    <property type="chains" value="2=1-46"/>
</dbReference>
<dbReference type="PDB" id="8G34">
    <property type="method" value="EM"/>
    <property type="resolution" value="3.20 A"/>
    <property type="chains" value="2=1-46"/>
</dbReference>
<dbReference type="PDB" id="8G38">
    <property type="method" value="EM"/>
    <property type="resolution" value="3.20 A"/>
    <property type="chains" value="2=1-46"/>
</dbReference>
<dbReference type="PDB" id="8G6W">
    <property type="method" value="EM"/>
    <property type="resolution" value="2.02 A"/>
    <property type="chains" value="1=1-46"/>
</dbReference>
<dbReference type="PDB" id="8G6X">
    <property type="method" value="EM"/>
    <property type="resolution" value="2.31 A"/>
    <property type="chains" value="1=1-46"/>
</dbReference>
<dbReference type="PDB" id="8G6Y">
    <property type="method" value="EM"/>
    <property type="resolution" value="2.09 A"/>
    <property type="chains" value="1=1-46"/>
</dbReference>
<dbReference type="PDB" id="8G7P">
    <property type="method" value="EM"/>
    <property type="resolution" value="2.90 A"/>
    <property type="chains" value="6=1-46"/>
</dbReference>
<dbReference type="PDB" id="8G7Q">
    <property type="method" value="EM"/>
    <property type="resolution" value="3.10 A"/>
    <property type="chains" value="6=1-46"/>
</dbReference>
<dbReference type="PDB" id="8G7R">
    <property type="method" value="EM"/>
    <property type="resolution" value="2.80 A"/>
    <property type="chains" value="6=1-46"/>
</dbReference>
<dbReference type="PDB" id="8G7S">
    <property type="method" value="EM"/>
    <property type="resolution" value="3.10 A"/>
    <property type="chains" value="6=1-46"/>
</dbReference>
<dbReference type="PDB" id="8HSP">
    <property type="method" value="EM"/>
    <property type="resolution" value="2.32 A"/>
    <property type="chains" value="1=1-46"/>
</dbReference>
<dbReference type="PDB" id="8HTZ">
    <property type="method" value="EM"/>
    <property type="resolution" value="2.40 A"/>
    <property type="chains" value="1=1-46"/>
</dbReference>
<dbReference type="PDB" id="8HU1">
    <property type="method" value="EM"/>
    <property type="resolution" value="2.69 A"/>
    <property type="chains" value="1=1-46"/>
</dbReference>
<dbReference type="PDB" id="8IFB">
    <property type="method" value="EM"/>
    <property type="resolution" value="2.43 A"/>
    <property type="chains" value="1=1-46"/>
</dbReference>
<dbReference type="PDB" id="8IFC">
    <property type="method" value="EM"/>
    <property type="resolution" value="2.90 A"/>
    <property type="chains" value="1=1-46"/>
</dbReference>
<dbReference type="PDB" id="8J1Z">
    <property type="method" value="EM"/>
    <property type="resolution" value="2.60 A"/>
    <property type="chains" value="1=1-46"/>
</dbReference>
<dbReference type="PDB" id="8P16">
    <property type="method" value="EM"/>
    <property type="resolution" value="2.77 A"/>
    <property type="chains" value="d=1-46"/>
</dbReference>
<dbReference type="PDB" id="8P17">
    <property type="method" value="EM"/>
    <property type="resolution" value="2.78 A"/>
    <property type="chains" value="d=1-46"/>
</dbReference>
<dbReference type="PDB" id="8P18">
    <property type="method" value="EM"/>
    <property type="resolution" value="2.77 A"/>
    <property type="chains" value="d=1-46"/>
</dbReference>
<dbReference type="PDB" id="8PEG">
    <property type="method" value="EM"/>
    <property type="resolution" value="3.30 A"/>
    <property type="chains" value="l=1-46"/>
</dbReference>
<dbReference type="PDB" id="8PHJ">
    <property type="method" value="EM"/>
    <property type="resolution" value="3.67 A"/>
    <property type="chains" value="1=1-46"/>
</dbReference>
<dbReference type="PDB" id="8PKL">
    <property type="method" value="EM"/>
    <property type="resolution" value="3.09 A"/>
    <property type="chains" value="l=1-46"/>
</dbReference>
<dbReference type="PDB" id="8PVA">
    <property type="method" value="EM"/>
    <property type="resolution" value="4.50 A"/>
    <property type="chains" value="1=1-46"/>
</dbReference>
<dbReference type="PDB" id="8Q4F">
    <property type="method" value="EM"/>
    <property type="resolution" value="3.10 A"/>
    <property type="chains" value="1=1-46"/>
</dbReference>
<dbReference type="PDB" id="8QBT">
    <property type="method" value="EM"/>
    <property type="resolution" value="2.20 A"/>
    <property type="chains" value="c=1-46"/>
</dbReference>
<dbReference type="PDB" id="8QK7">
    <property type="method" value="EM"/>
    <property type="resolution" value="2.77 A"/>
    <property type="chains" value="d=1-46"/>
</dbReference>
<dbReference type="PDB" id="8QOA">
    <property type="method" value="EM"/>
    <property type="resolution" value="2.00 A"/>
    <property type="chains" value="1=1-46"/>
</dbReference>
<dbReference type="PDB" id="8R3V">
    <property type="method" value="EM"/>
    <property type="resolution" value="3.28 A"/>
    <property type="chains" value="l2=1-46"/>
</dbReference>
<dbReference type="PDB" id="8R6C">
    <property type="method" value="EM"/>
    <property type="resolution" value="2.20 A"/>
    <property type="chains" value="1=1-46"/>
</dbReference>
<dbReference type="PDB" id="8R8M">
    <property type="method" value="EM"/>
    <property type="resolution" value="2.40 A"/>
    <property type="chains" value="1=1-46"/>
</dbReference>
<dbReference type="PDB" id="8RCL">
    <property type="method" value="EM"/>
    <property type="resolution" value="3.49 A"/>
    <property type="chains" value="l2=1-46"/>
</dbReference>
<dbReference type="PDB" id="8RCM">
    <property type="method" value="EM"/>
    <property type="resolution" value="3.59 A"/>
    <property type="chains" value="l2=1-46"/>
</dbReference>
<dbReference type="PDB" id="8RCS">
    <property type="method" value="EM"/>
    <property type="resolution" value="4.46 A"/>
    <property type="chains" value="l2=1-46"/>
</dbReference>
<dbReference type="PDB" id="8RCT">
    <property type="method" value="EM"/>
    <property type="resolution" value="5.32 A"/>
    <property type="chains" value="l2=1-46"/>
</dbReference>
<dbReference type="PDB" id="8RPY">
    <property type="method" value="EM"/>
    <property type="resolution" value="2.64 A"/>
    <property type="chains" value="2=1-46"/>
</dbReference>
<dbReference type="PDB" id="8RPZ">
    <property type="method" value="EM"/>
    <property type="resolution" value="2.44 A"/>
    <property type="chains" value="2=1-46"/>
</dbReference>
<dbReference type="PDB" id="8RQ0">
    <property type="method" value="EM"/>
    <property type="resolution" value="2.44 A"/>
    <property type="chains" value="2=1-46"/>
</dbReference>
<dbReference type="PDB" id="8RQ2">
    <property type="method" value="EM"/>
    <property type="resolution" value="2.44 A"/>
    <property type="chains" value="2=1-46"/>
</dbReference>
<dbReference type="PDB" id="8SYL">
    <property type="method" value="EM"/>
    <property type="resolution" value="2.90 A"/>
    <property type="chains" value="6=1-46"/>
</dbReference>
<dbReference type="PDB" id="8T5D">
    <property type="method" value="EM"/>
    <property type="resolution" value="3.20 A"/>
    <property type="chains" value="2=1-46"/>
</dbReference>
<dbReference type="PDB" id="8T5H">
    <property type="method" value="EM"/>
    <property type="resolution" value="3.30 A"/>
    <property type="chains" value="2=1-46"/>
</dbReference>
<dbReference type="PDB" id="8UPO">
    <property type="method" value="EM"/>
    <property type="resolution" value="5.50 A"/>
    <property type="chains" value="m=1-46"/>
</dbReference>
<dbReference type="PDB" id="8UPR">
    <property type="method" value="EM"/>
    <property type="resolution" value="5.30 A"/>
    <property type="chains" value="m=1-46"/>
</dbReference>
<dbReference type="PDB" id="8UQL">
    <property type="method" value="EM"/>
    <property type="resolution" value="3.20 A"/>
    <property type="chains" value="m=1-46"/>
</dbReference>
<dbReference type="PDB" id="8UQM">
    <property type="method" value="EM"/>
    <property type="resolution" value="5.30 A"/>
    <property type="chains" value="m=1-46"/>
</dbReference>
<dbReference type="PDB" id="8UQP">
    <property type="method" value="EM"/>
    <property type="resolution" value="3.80 A"/>
    <property type="chains" value="m=1-46"/>
</dbReference>
<dbReference type="PDB" id="8UR0">
    <property type="method" value="EM"/>
    <property type="resolution" value="3.40 A"/>
    <property type="chains" value="m=1-46"/>
</dbReference>
<dbReference type="PDB" id="8URH">
    <property type="method" value="EM"/>
    <property type="resolution" value="5.70 A"/>
    <property type="chains" value="m=1-46"/>
</dbReference>
<dbReference type="PDB" id="8URI">
    <property type="method" value="EM"/>
    <property type="resolution" value="5.30 A"/>
    <property type="chains" value="m=1-46"/>
</dbReference>
<dbReference type="PDB" id="8URX">
    <property type="method" value="EM"/>
    <property type="resolution" value="6.60 A"/>
    <property type="chains" value="m=1-46"/>
</dbReference>
<dbReference type="PDB" id="8URY">
    <property type="method" value="EM"/>
    <property type="resolution" value="3.10 A"/>
    <property type="chains" value="m=1-46"/>
</dbReference>
<dbReference type="PDB" id="8VS9">
    <property type="method" value="EM"/>
    <property type="resolution" value="3.90 A"/>
    <property type="chains" value="L34=1-46"/>
</dbReference>
<dbReference type="PDB" id="8VSA">
    <property type="method" value="EM"/>
    <property type="resolution" value="3.70 A"/>
    <property type="chains" value="L34=1-46"/>
</dbReference>
<dbReference type="PDB" id="8W51">
    <property type="method" value="EM"/>
    <property type="resolution" value="2.40 A"/>
    <property type="chains" value="3=1-46"/>
</dbReference>
<dbReference type="PDB" id="8YUO">
    <property type="method" value="EM"/>
    <property type="resolution" value="2.25 A"/>
    <property type="chains" value="1=1-46"/>
</dbReference>
<dbReference type="PDB" id="8YUP">
    <property type="method" value="EM"/>
    <property type="resolution" value="2.39 A"/>
    <property type="chains" value="1=1-46"/>
</dbReference>
<dbReference type="PDB" id="8YUQ">
    <property type="method" value="EM"/>
    <property type="resolution" value="2.41 A"/>
    <property type="chains" value="1=1-46"/>
</dbReference>
<dbReference type="PDB" id="8YUR">
    <property type="method" value="EM"/>
    <property type="resolution" value="2.47 A"/>
    <property type="chains" value="1=1-46"/>
</dbReference>
<dbReference type="PDB" id="8YUS">
    <property type="method" value="EM"/>
    <property type="resolution" value="2.43 A"/>
    <property type="chains" value="1=1-46"/>
</dbReference>
<dbReference type="PDB" id="9AX7">
    <property type="method" value="EM"/>
    <property type="resolution" value="2.63 A"/>
    <property type="chains" value="1=1-46"/>
</dbReference>
<dbReference type="PDB" id="9AX8">
    <property type="method" value="EM"/>
    <property type="resolution" value="2.60 A"/>
    <property type="chains" value="7=1-46"/>
</dbReference>
<dbReference type="PDB" id="9CG5">
    <property type="method" value="EM"/>
    <property type="resolution" value="2.59 A"/>
    <property type="chains" value="1=1-46"/>
</dbReference>
<dbReference type="PDB" id="9CG6">
    <property type="method" value="EM"/>
    <property type="resolution" value="2.61 A"/>
    <property type="chains" value="1=1-46"/>
</dbReference>
<dbReference type="PDB" id="9CG7">
    <property type="method" value="EM"/>
    <property type="resolution" value="2.75 A"/>
    <property type="chains" value="1=1-46"/>
</dbReference>
<dbReference type="PDB" id="9CL9">
    <property type="method" value="EM"/>
    <property type="resolution" value="5.04 A"/>
    <property type="chains" value="2=9-45"/>
</dbReference>
<dbReference type="PDB" id="9D89">
    <property type="method" value="EM"/>
    <property type="resolution" value="1.95 A"/>
    <property type="chains" value="1=1-46"/>
</dbReference>
<dbReference type="PDB" id="9DYG">
    <property type="method" value="EM"/>
    <property type="resolution" value="5.27 A"/>
    <property type="chains" value="2=9-45"/>
</dbReference>
<dbReference type="PDB" id="9FBV">
    <property type="method" value="EM"/>
    <property type="resolution" value="2.40 A"/>
    <property type="chains" value="1=1-46"/>
</dbReference>
<dbReference type="PDB" id="9GFT">
    <property type="method" value="EM"/>
    <property type="resolution" value="3.10 A"/>
    <property type="chains" value="Ax/p=1-46"/>
</dbReference>
<dbReference type="PDB" id="9GGR">
    <property type="method" value="EM"/>
    <property type="resolution" value="3.20 A"/>
    <property type="chains" value="Ax/p=1-46"/>
</dbReference>
<dbReference type="PDB" id="9H3M">
    <property type="method" value="EM"/>
    <property type="resolution" value="4.41 A"/>
    <property type="chains" value="2=1-46"/>
</dbReference>
<dbReference type="PDB" id="9H3N">
    <property type="method" value="EM"/>
    <property type="resolution" value="3.69 A"/>
    <property type="chains" value="2=1-46"/>
</dbReference>
<dbReference type="PDB" id="9H3O">
    <property type="method" value="EM"/>
    <property type="resolution" value="4.54 A"/>
    <property type="chains" value="2=1-46"/>
</dbReference>
<dbReference type="PDB" id="9H3P">
    <property type="method" value="EM"/>
    <property type="resolution" value="7.06 A"/>
    <property type="chains" value="2=1-46"/>
</dbReference>
<dbReference type="PDB" id="9H3Q">
    <property type="method" value="EM"/>
    <property type="resolution" value="4.02 A"/>
    <property type="chains" value="2=1-46"/>
</dbReference>
<dbReference type="PDB" id="9H3R">
    <property type="method" value="EM"/>
    <property type="resolution" value="4.12 A"/>
    <property type="chains" value="2=1-46"/>
</dbReference>
<dbReference type="PDB" id="9H3S">
    <property type="method" value="EM"/>
    <property type="resolution" value="4.16 A"/>
    <property type="chains" value="2=1-46"/>
</dbReference>
<dbReference type="PDB" id="9H3T">
    <property type="method" value="EM"/>
    <property type="resolution" value="3.85 A"/>
    <property type="chains" value="2=1-46"/>
</dbReference>
<dbReference type="PDB" id="9H3U">
    <property type="method" value="EM"/>
    <property type="resolution" value="3.47 A"/>
    <property type="chains" value="2=1-46"/>
</dbReference>
<dbReference type="PDB" id="9H3V">
    <property type="method" value="EM"/>
    <property type="resolution" value="3.55 A"/>
    <property type="chains" value="2=1-46"/>
</dbReference>
<dbReference type="PDB" id="9H3W">
    <property type="method" value="EM"/>
    <property type="resolution" value="5.38 A"/>
    <property type="chains" value="2=1-46"/>
</dbReference>
<dbReference type="PDB" id="9H3X">
    <property type="method" value="EM"/>
    <property type="resolution" value="4.12 A"/>
    <property type="chains" value="2=1-46"/>
</dbReference>
<dbReference type="PDB" id="9H3Y">
    <property type="method" value="EM"/>
    <property type="resolution" value="3.09 A"/>
    <property type="chains" value="2=1-46"/>
</dbReference>
<dbReference type="PDB" id="9H3Z">
    <property type="method" value="EM"/>
    <property type="resolution" value="2.98 A"/>
    <property type="chains" value="2=1-46"/>
</dbReference>
<dbReference type="PDB" id="9HA1">
    <property type="method" value="EM"/>
    <property type="resolution" value="4.17 A"/>
    <property type="chains" value="2=1-46"/>
</dbReference>
<dbReference type="PDB" id="9HA2">
    <property type="method" value="EM"/>
    <property type="resolution" value="4.17 A"/>
    <property type="chains" value="2=1-46"/>
</dbReference>
<dbReference type="PDB" id="9HA3">
    <property type="method" value="EM"/>
    <property type="resolution" value="3.62 A"/>
    <property type="chains" value="2=1-46"/>
</dbReference>
<dbReference type="PDB" id="9HA4">
    <property type="method" value="EM"/>
    <property type="resolution" value="4.26 A"/>
    <property type="chains" value="2=1-46"/>
</dbReference>
<dbReference type="PDB" id="9HA5">
    <property type="method" value="EM"/>
    <property type="resolution" value="3.30 A"/>
    <property type="chains" value="2=1-46"/>
</dbReference>
<dbReference type="PDB" id="9HA6">
    <property type="method" value="EM"/>
    <property type="resolution" value="3.08 A"/>
    <property type="chains" value="2=1-46"/>
</dbReference>
<dbReference type="PDB" id="9HA7">
    <property type="method" value="EM"/>
    <property type="resolution" value="4.37 A"/>
    <property type="chains" value="2=1-46"/>
</dbReference>
<dbReference type="PDB" id="9HAI">
    <property type="method" value="EM"/>
    <property type="resolution" value="3.01 A"/>
    <property type="chains" value="2=1-46"/>
</dbReference>
<dbReference type="PDB" id="9MOR">
    <property type="method" value="EM"/>
    <property type="resolution" value="2.65 A"/>
    <property type="chains" value="d=1-46"/>
</dbReference>
<dbReference type="PDB" id="9MQ4">
    <property type="method" value="EM"/>
    <property type="resolution" value="2.78 A"/>
    <property type="chains" value="d=1-46"/>
</dbReference>
<dbReference type="PDBsum" id="2J28"/>
<dbReference type="PDBsum" id="2RDO"/>
<dbReference type="PDBsum" id="3BBX"/>
<dbReference type="PDBsum" id="3J5L"/>
<dbReference type="PDBsum" id="3J7Z"/>
<dbReference type="PDBsum" id="3J8G"/>
<dbReference type="PDBsum" id="3J9Y"/>
<dbReference type="PDBsum" id="3J9Z"/>
<dbReference type="PDBsum" id="3JA1"/>
<dbReference type="PDBsum" id="3JBU"/>
<dbReference type="PDBsum" id="3JBV"/>
<dbReference type="PDBsum" id="3JCD"/>
<dbReference type="PDBsum" id="3JCE"/>
<dbReference type="PDBsum" id="3JCJ"/>
<dbReference type="PDBsum" id="3JCN"/>
<dbReference type="PDBsum" id="4CSU"/>
<dbReference type="PDBsum" id="4U1U"/>
<dbReference type="PDBsum" id="4U1V"/>
<dbReference type="PDBsum" id="4U20"/>
<dbReference type="PDBsum" id="4U24"/>
<dbReference type="PDBsum" id="4U25"/>
<dbReference type="PDBsum" id="4U26"/>
<dbReference type="PDBsum" id="4U27"/>
<dbReference type="PDBsum" id="4UY8"/>
<dbReference type="PDBsum" id="4V4H"/>
<dbReference type="PDBsum" id="4V4Q"/>
<dbReference type="PDBsum" id="4V50"/>
<dbReference type="PDBsum" id="4V52"/>
<dbReference type="PDBsum" id="4V53"/>
<dbReference type="PDBsum" id="4V54"/>
<dbReference type="PDBsum" id="4V55"/>
<dbReference type="PDBsum" id="4V56"/>
<dbReference type="PDBsum" id="4V57"/>
<dbReference type="PDBsum" id="4V5B"/>
<dbReference type="PDBsum" id="4V5H"/>
<dbReference type="PDBsum" id="4V5Y"/>
<dbReference type="PDBsum" id="4V64"/>
<dbReference type="PDBsum" id="4V65"/>
<dbReference type="PDBsum" id="4V66"/>
<dbReference type="PDBsum" id="4V69"/>
<dbReference type="PDBsum" id="4V6C"/>
<dbReference type="PDBsum" id="4V6D"/>
<dbReference type="PDBsum" id="4V6E"/>
<dbReference type="PDBsum" id="4V6K"/>
<dbReference type="PDBsum" id="4V6L"/>
<dbReference type="PDBsum" id="4V6M"/>
<dbReference type="PDBsum" id="4V6N"/>
<dbReference type="PDBsum" id="4V6O"/>
<dbReference type="PDBsum" id="4V6P"/>
<dbReference type="PDBsum" id="4V6Q"/>
<dbReference type="PDBsum" id="4V6R"/>
<dbReference type="PDBsum" id="4V6S"/>
<dbReference type="PDBsum" id="4V6T"/>
<dbReference type="PDBsum" id="4V6V"/>
<dbReference type="PDBsum" id="4V6Y"/>
<dbReference type="PDBsum" id="4V6Z"/>
<dbReference type="PDBsum" id="4V70"/>
<dbReference type="PDBsum" id="4V71"/>
<dbReference type="PDBsum" id="4V72"/>
<dbReference type="PDBsum" id="4V73"/>
<dbReference type="PDBsum" id="4V74"/>
<dbReference type="PDBsum" id="4V75"/>
<dbReference type="PDBsum" id="4V76"/>
<dbReference type="PDBsum" id="4V77"/>
<dbReference type="PDBsum" id="4V78"/>
<dbReference type="PDBsum" id="4V79"/>
<dbReference type="PDBsum" id="4V7A"/>
<dbReference type="PDBsum" id="4V7B"/>
<dbReference type="PDBsum" id="4V7C"/>
<dbReference type="PDBsum" id="4V7D"/>
<dbReference type="PDBsum" id="4V7I"/>
<dbReference type="PDBsum" id="4V7S"/>
<dbReference type="PDBsum" id="4V7T"/>
<dbReference type="PDBsum" id="4V7U"/>
<dbReference type="PDBsum" id="4V7V"/>
<dbReference type="PDBsum" id="4V85"/>
<dbReference type="PDBsum" id="4V89"/>
<dbReference type="PDBsum" id="4V9C"/>
<dbReference type="PDBsum" id="4V9D"/>
<dbReference type="PDBsum" id="4V9O"/>
<dbReference type="PDBsum" id="4V9P"/>
<dbReference type="PDBsum" id="4WF1"/>
<dbReference type="PDBsum" id="4WOI"/>
<dbReference type="PDBsum" id="4WWW"/>
<dbReference type="PDBsum" id="4YBB"/>
<dbReference type="PDBsum" id="5ADY"/>
<dbReference type="PDBsum" id="5AFI"/>
<dbReference type="PDBsum" id="5AKA"/>
<dbReference type="PDBsum" id="5GAD"/>
<dbReference type="PDBsum" id="5GAE"/>
<dbReference type="PDBsum" id="5GAF"/>
<dbReference type="PDBsum" id="5GAG"/>
<dbReference type="PDBsum" id="5GAH"/>
<dbReference type="PDBsum" id="5H5U"/>
<dbReference type="PDBsum" id="5IQR"/>
<dbReference type="PDBsum" id="5IT8"/>
<dbReference type="PDBsum" id="5J5B"/>
<dbReference type="PDBsum" id="5J7L"/>
<dbReference type="PDBsum" id="5J88"/>
<dbReference type="PDBsum" id="5J8A"/>
<dbReference type="PDBsum" id="5J91"/>
<dbReference type="PDBsum" id="5JC9"/>
<dbReference type="PDBsum" id="5JTE"/>
<dbReference type="PDBsum" id="5JU8"/>
<dbReference type="PDBsum" id="5KCR"/>
<dbReference type="PDBsum" id="5KCS"/>
<dbReference type="PDBsum" id="5KPS"/>
<dbReference type="PDBsum" id="5KPV"/>
<dbReference type="PDBsum" id="5KPW"/>
<dbReference type="PDBsum" id="5KPX"/>
<dbReference type="PDBsum" id="5L3P"/>
<dbReference type="PDBsum" id="5LZA"/>
<dbReference type="PDBsum" id="5LZB"/>
<dbReference type="PDBsum" id="5LZC"/>
<dbReference type="PDBsum" id="5LZD"/>
<dbReference type="PDBsum" id="5LZE"/>
<dbReference type="PDBsum" id="5LZF"/>
<dbReference type="PDBsum" id="5MDV"/>
<dbReference type="PDBsum" id="5MDW"/>
<dbReference type="PDBsum" id="5MDY"/>
<dbReference type="PDBsum" id="5MDZ"/>
<dbReference type="PDBsum" id="5MGP"/>
<dbReference type="PDBsum" id="5NCO"/>
<dbReference type="PDBsum" id="5NP6"/>
<dbReference type="PDBsum" id="5NWY"/>
<dbReference type="PDBsum" id="5O2R"/>
<dbReference type="PDBsum" id="5U4I"/>
<dbReference type="PDBsum" id="5U9F"/>
<dbReference type="PDBsum" id="5U9G"/>
<dbReference type="PDBsum" id="5UYK"/>
<dbReference type="PDBsum" id="5UYL"/>
<dbReference type="PDBsum" id="5UYM"/>
<dbReference type="PDBsum" id="5UYN"/>
<dbReference type="PDBsum" id="5UYP"/>
<dbReference type="PDBsum" id="5UYQ"/>
<dbReference type="PDBsum" id="5WDT"/>
<dbReference type="PDBsum" id="5WE4"/>
<dbReference type="PDBsum" id="5WE6"/>
<dbReference type="PDBsum" id="5WF0"/>
<dbReference type="PDBsum" id="5WFK"/>
<dbReference type="PDBsum" id="5WFS"/>
<dbReference type="PDBsum" id="6BU8"/>
<dbReference type="PDBsum" id="6BY1"/>
<dbReference type="PDBsum" id="6C4I"/>
<dbReference type="PDBsum" id="6DNC"/>
<dbReference type="PDBsum" id="6ENF"/>
<dbReference type="PDBsum" id="6ENJ"/>
<dbReference type="PDBsum" id="6ENU"/>
<dbReference type="PDBsum" id="6GBZ"/>
<dbReference type="PDBsum" id="6GC0"/>
<dbReference type="PDBsum" id="6GC4"/>
<dbReference type="PDBsum" id="6GC6"/>
<dbReference type="PDBsum" id="6GC7"/>
<dbReference type="PDBsum" id="6GC8"/>
<dbReference type="PDBsum" id="6GWT"/>
<dbReference type="PDBsum" id="6GXM"/>
<dbReference type="PDBsum" id="6GXN"/>
<dbReference type="PDBsum" id="6GXO"/>
<dbReference type="PDBsum" id="6GXP"/>
<dbReference type="PDBsum" id="6H4N"/>
<dbReference type="PDBsum" id="6H58"/>
<dbReference type="PDBsum" id="6HRM"/>
<dbReference type="PDBsum" id="6I0Y"/>
<dbReference type="PDBsum" id="6I7V"/>
<dbReference type="PDBsum" id="6O9J"/>
<dbReference type="PDBsum" id="6O9K"/>
<dbReference type="PDBsum" id="6OFX"/>
<dbReference type="PDBsum" id="6OG7"/>
<dbReference type="PDBsum" id="6OGF"/>
<dbReference type="PDBsum" id="6OGG"/>
<dbReference type="PDBsum" id="6OGI"/>
<dbReference type="PDBsum" id="6OM6"/>
<dbReference type="PDBsum" id="6ORE"/>
<dbReference type="PDBsum" id="6ORL"/>
<dbReference type="PDBsum" id="6OSK"/>
<dbReference type="PDBsum" id="6OSQ"/>
<dbReference type="PDBsum" id="6OST"/>
<dbReference type="PDBsum" id="6OT3"/>
<dbReference type="PDBsum" id="6OUO"/>
<dbReference type="PDBsum" id="6PJ6"/>
<dbReference type="PDBsum" id="6Q97"/>
<dbReference type="PDBsum" id="6Q98"/>
<dbReference type="PDBsum" id="6Q9A"/>
<dbReference type="PDBsum" id="6QDW"/>
<dbReference type="PDBsum" id="6QUL"/>
<dbReference type="PDBsum" id="6S0K"/>
<dbReference type="PDBsum" id="6SZS"/>
<dbReference type="PDBsum" id="6TBV"/>
<dbReference type="PDBsum" id="6TC3"/>
<dbReference type="PDBsum" id="6U48"/>
<dbReference type="PDBsum" id="6VU3"/>
<dbReference type="PDBsum" id="6VWL"/>
<dbReference type="PDBsum" id="6VWM"/>
<dbReference type="PDBsum" id="6VWN"/>
<dbReference type="PDBsum" id="6VYQ"/>
<dbReference type="PDBsum" id="6VYR"/>
<dbReference type="PDBsum" id="6VYS"/>
<dbReference type="PDBsum" id="6VYT"/>
<dbReference type="PDBsum" id="6VYU"/>
<dbReference type="PDBsum" id="6VYW"/>
<dbReference type="PDBsum" id="6VYX"/>
<dbReference type="PDBsum" id="6VYY"/>
<dbReference type="PDBsum" id="6VYZ"/>
<dbReference type="PDBsum" id="6VZ2"/>
<dbReference type="PDBsum" id="6VZ3"/>
<dbReference type="PDBsum" id="6VZ5"/>
<dbReference type="PDBsum" id="6VZ7"/>
<dbReference type="PDBsum" id="6VZJ"/>
<dbReference type="PDBsum" id="6WD0"/>
<dbReference type="PDBsum" id="6WD1"/>
<dbReference type="PDBsum" id="6WD2"/>
<dbReference type="PDBsum" id="6WD3"/>
<dbReference type="PDBsum" id="6WD4"/>
<dbReference type="PDBsum" id="6WD5"/>
<dbReference type="PDBsum" id="6WD6"/>
<dbReference type="PDBsum" id="6WD7"/>
<dbReference type="PDBsum" id="6WD8"/>
<dbReference type="PDBsum" id="6WD9"/>
<dbReference type="PDBsum" id="6WDA"/>
<dbReference type="PDBsum" id="6WDB"/>
<dbReference type="PDBsum" id="6WDC"/>
<dbReference type="PDBsum" id="6WDD"/>
<dbReference type="PDBsum" id="6WDE"/>
<dbReference type="PDBsum" id="6WDF"/>
<dbReference type="PDBsum" id="6WDG"/>
<dbReference type="PDBsum" id="6WDH"/>
<dbReference type="PDBsum" id="6WDI"/>
<dbReference type="PDBsum" id="6WDJ"/>
<dbReference type="PDBsum" id="6WDK"/>
<dbReference type="PDBsum" id="6WDL"/>
<dbReference type="PDBsum" id="6WDM"/>
<dbReference type="PDBsum" id="6WNT"/>
<dbReference type="PDBsum" id="6WNV"/>
<dbReference type="PDBsum" id="6WNW"/>
<dbReference type="PDBsum" id="6X6T"/>
<dbReference type="PDBsum" id="6X7F"/>
<dbReference type="PDBsum" id="6X7K"/>
<dbReference type="PDBsum" id="6X9Q"/>
<dbReference type="PDBsum" id="6XDQ"/>
<dbReference type="PDBsum" id="6XDR"/>
<dbReference type="PDBsum" id="6XGF"/>
<dbReference type="PDBsum" id="6XII"/>
<dbReference type="PDBsum" id="6XIJ"/>
<dbReference type="PDBsum" id="6XZ7"/>
<dbReference type="PDBsum" id="6XZA"/>
<dbReference type="PDBsum" id="6XZB"/>
<dbReference type="PDBsum" id="6Y69"/>
<dbReference type="PDBsum" id="6YS3"/>
<dbReference type="PDBsum" id="6YSR"/>
<dbReference type="PDBsum" id="6YSS"/>
<dbReference type="PDBsum" id="6YST"/>
<dbReference type="PDBsum" id="6YSU"/>
<dbReference type="PDBsum" id="6ZTJ"/>
<dbReference type="PDBsum" id="6ZTL"/>
<dbReference type="PDBsum" id="6ZTM"/>
<dbReference type="PDBsum" id="6ZTN"/>
<dbReference type="PDBsum" id="6ZTO"/>
<dbReference type="PDBsum" id="6ZTP"/>
<dbReference type="PDBsum" id="6ZU1"/>
<dbReference type="PDBsum" id="7ABZ"/>
<dbReference type="PDBsum" id="7AC7"/>
<dbReference type="PDBsum" id="7ACJ"/>
<dbReference type="PDBsum" id="7ACR"/>
<dbReference type="PDBsum" id="7B5K"/>
<dbReference type="PDBsum" id="7BL2"/>
<dbReference type="PDBsum" id="7BL3"/>
<dbReference type="PDBsum" id="7BL4"/>
<dbReference type="PDBsum" id="7BL5"/>
<dbReference type="PDBsum" id="7BL6"/>
<dbReference type="PDBsum" id="7BV8"/>
<dbReference type="PDBsum" id="7D6Z"/>
<dbReference type="PDBsum" id="7D80"/>
<dbReference type="PDBsum" id="7JSS"/>
<dbReference type="PDBsum" id="7JSW"/>
<dbReference type="PDBsum" id="7JSZ"/>
<dbReference type="PDBsum" id="7JT1"/>
<dbReference type="PDBsum" id="7JT2"/>
<dbReference type="PDBsum" id="7JT3"/>
<dbReference type="PDBsum" id="7K00"/>
<dbReference type="PDBsum" id="7K50"/>
<dbReference type="PDBsum" id="7K51"/>
<dbReference type="PDBsum" id="7K52"/>
<dbReference type="PDBsum" id="7K53"/>
<dbReference type="PDBsum" id="7K54"/>
<dbReference type="PDBsum" id="7K55"/>
<dbReference type="PDBsum" id="7LV0"/>
<dbReference type="PDBsum" id="7LVK"/>
<dbReference type="PDBsum" id="7M5D"/>
<dbReference type="PDBsum" id="7N1P"/>
<dbReference type="PDBsum" id="7N2C"/>
<dbReference type="PDBsum" id="7N2U"/>
<dbReference type="PDBsum" id="7N2V"/>
<dbReference type="PDBsum" id="7N30"/>
<dbReference type="PDBsum" id="7N31"/>
<dbReference type="PDBsum" id="7NBU"/>
<dbReference type="PDBsum" id="7NSO"/>
<dbReference type="PDBsum" id="7NSP"/>
<dbReference type="PDBsum" id="7NSQ"/>
<dbReference type="PDBsum" id="7NWT"/>
<dbReference type="PDBsum" id="7NWW"/>
<dbReference type="PDBsum" id="7O19"/>
<dbReference type="PDBsum" id="7O1A"/>
<dbReference type="PDBsum" id="7O1C"/>
<dbReference type="PDBsum" id="7ODE"/>
<dbReference type="PDBsum" id="7OIF"/>
<dbReference type="PDBsum" id="7OIG"/>
<dbReference type="PDBsum" id="7OII"/>
<dbReference type="PDBsum" id="7OIZ"/>
<dbReference type="PDBsum" id="7OJ0"/>
<dbReference type="PDBsum" id="7OT5"/>
<dbReference type="PDBsum" id="7P3K"/>
<dbReference type="PDBsum" id="7PJS"/>
<dbReference type="PDBsum" id="7PJT"/>
<dbReference type="PDBsum" id="7PJU"/>
<dbReference type="PDBsum" id="7PJV"/>
<dbReference type="PDBsum" id="7PJW"/>
<dbReference type="PDBsum" id="7PJX"/>
<dbReference type="PDBsum" id="7PJY"/>
<dbReference type="PDBsum" id="7PJZ"/>
<dbReference type="PDBsum" id="7Q4K"/>
<dbReference type="PDBsum" id="7QG8"/>
<dbReference type="PDBsum" id="7QGN"/>
<dbReference type="PDBsum" id="7QGR"/>
<dbReference type="PDBsum" id="7QQ3"/>
<dbReference type="PDBsum" id="7S1G"/>
<dbReference type="PDBsum" id="7S1H"/>
<dbReference type="PDBsum" id="7S1I"/>
<dbReference type="PDBsum" id="7S1J"/>
<dbReference type="PDBsum" id="7S1K"/>
<dbReference type="PDBsum" id="7SA4"/>
<dbReference type="PDBsum" id="7SS9"/>
<dbReference type="PDBsum" id="7SSD"/>
<dbReference type="PDBsum" id="7SSL"/>
<dbReference type="PDBsum" id="7SSN"/>
<dbReference type="PDBsum" id="7SSO"/>
<dbReference type="PDBsum" id="7SSW"/>
<dbReference type="PDBsum" id="7ST2"/>
<dbReference type="PDBsum" id="7ST6"/>
<dbReference type="PDBsum" id="7ST7"/>
<dbReference type="PDBsum" id="7TOS"/>
<dbReference type="PDBsum" id="7UG7"/>
<dbReference type="PDBsum" id="7UPH"/>
<dbReference type="PDBsum" id="7Y7C"/>
<dbReference type="PDBsum" id="7Y7D"/>
<dbReference type="PDBsum" id="7Y7E"/>
<dbReference type="PDBsum" id="7Y7F"/>
<dbReference type="PDBsum" id="7Y7G"/>
<dbReference type="PDBsum" id="7Y7H"/>
<dbReference type="PDBsum" id="7YLA"/>
<dbReference type="PDBsum" id="7Z20"/>
<dbReference type="PDBsum" id="7ZOD"/>
<dbReference type="PDBsum" id="7ZP8"/>
<dbReference type="PDBsum" id="7ZQ5"/>
<dbReference type="PDBsum" id="7ZQ6"/>
<dbReference type="PDBsum" id="7ZTA"/>
<dbReference type="PDBsum" id="8A3L"/>
<dbReference type="PDBsum" id="8AKN"/>
<dbReference type="PDBsum" id="8AM9"/>
<dbReference type="PDBsum" id="8ANA"/>
<dbReference type="PDBsum" id="8AP4"/>
<dbReference type="PDBsum" id="8AYE"/>
<dbReference type="PDBsum" id="8B0X"/>
<dbReference type="PDBsum" id="8B7Y"/>
<dbReference type="PDBsum" id="8BF7"/>
<dbReference type="PDBsum" id="8BGE"/>
<dbReference type="PDBsum" id="8BGH"/>
<dbReference type="PDBsum" id="8BH4"/>
<dbReference type="PDBsum" id="8BHJ"/>
<dbReference type="PDBsum" id="8BHL"/>
<dbReference type="PDBsum" id="8BHN"/>
<dbReference type="PDBsum" id="8BHP"/>
<dbReference type="PDBsum" id="8BIL"/>
<dbReference type="PDBsum" id="8BIM"/>
<dbReference type="PDBsum" id="8C8X"/>
<dbReference type="PDBsum" id="8C8Y"/>
<dbReference type="PDBsum" id="8C8Z"/>
<dbReference type="PDBsum" id="8C90"/>
<dbReference type="PDBsum" id="8C91"/>
<dbReference type="PDBsum" id="8C92"/>
<dbReference type="PDBsum" id="8C93"/>
<dbReference type="PDBsum" id="8C94"/>
<dbReference type="PDBsum" id="8C95"/>
<dbReference type="PDBsum" id="8C96"/>
<dbReference type="PDBsum" id="8C97"/>
<dbReference type="PDBsum" id="8C98"/>
<dbReference type="PDBsum" id="8C99"/>
<dbReference type="PDBsum" id="8C9A"/>
<dbReference type="PDBsum" id="8C9B"/>
<dbReference type="PDBsum" id="8CAM"/>
<dbReference type="PDBsum" id="8CEU"/>
<dbReference type="PDBsum" id="8CGD"/>
<dbReference type="PDBsum" id="8CGK"/>
<dbReference type="PDBsum" id="8CGV"/>
<dbReference type="PDBsum" id="8E30"/>
<dbReference type="PDBsum" id="8E32"/>
<dbReference type="PDBsum" id="8E33"/>
<dbReference type="PDBsum" id="8E35"/>
<dbReference type="PDBsum" id="8E36"/>
<dbReference type="PDBsum" id="8E3L"/>
<dbReference type="PDBsum" id="8E3M"/>
<dbReference type="PDBsum" id="8E3O"/>
<dbReference type="PDBsum" id="8E41"/>
<dbReference type="PDBsum" id="8E42"/>
<dbReference type="PDBsum" id="8E43"/>
<dbReference type="PDBsum" id="8E44"/>
<dbReference type="PDBsum" id="8E45"/>
<dbReference type="PDBsum" id="8E46"/>
<dbReference type="PDBsum" id="8E47"/>
<dbReference type="PDBsum" id="8E48"/>
<dbReference type="PDBsum" id="8E49"/>
<dbReference type="PDBsum" id="8EIU"/>
<dbReference type="PDBsum" id="8EKC"/>
<dbReference type="PDBsum" id="8EMM"/>
<dbReference type="PDBsum" id="8FIZ"/>
<dbReference type="PDBsum" id="8FTO"/>
<dbReference type="PDBsum" id="8FZD"/>
<dbReference type="PDBsum" id="8FZE"/>
<dbReference type="PDBsum" id="8FZF"/>
<dbReference type="PDBsum" id="8FZG"/>
<dbReference type="PDBsum" id="8FZH"/>
<dbReference type="PDBsum" id="8FZI"/>
<dbReference type="PDBsum" id="8FZJ"/>
<dbReference type="PDBsum" id="8G2U"/>
<dbReference type="PDBsum" id="8G31"/>
<dbReference type="PDBsum" id="8G34"/>
<dbReference type="PDBsum" id="8G38"/>
<dbReference type="PDBsum" id="8G6W"/>
<dbReference type="PDBsum" id="8G6X"/>
<dbReference type="PDBsum" id="8G6Y"/>
<dbReference type="PDBsum" id="8G7P"/>
<dbReference type="PDBsum" id="8G7Q"/>
<dbReference type="PDBsum" id="8G7R"/>
<dbReference type="PDBsum" id="8G7S"/>
<dbReference type="PDBsum" id="8HSP"/>
<dbReference type="PDBsum" id="8HTZ"/>
<dbReference type="PDBsum" id="8HU1"/>
<dbReference type="PDBsum" id="8IFB"/>
<dbReference type="PDBsum" id="8IFC"/>
<dbReference type="PDBsum" id="8J1Z"/>
<dbReference type="PDBsum" id="8P16"/>
<dbReference type="PDBsum" id="8P17"/>
<dbReference type="PDBsum" id="8P18"/>
<dbReference type="PDBsum" id="8PEG"/>
<dbReference type="PDBsum" id="8PHJ"/>
<dbReference type="PDBsum" id="8PKL"/>
<dbReference type="PDBsum" id="8PVA"/>
<dbReference type="PDBsum" id="8Q4F"/>
<dbReference type="PDBsum" id="8QBT"/>
<dbReference type="PDBsum" id="8QK7"/>
<dbReference type="PDBsum" id="8QOA"/>
<dbReference type="PDBsum" id="8R3V"/>
<dbReference type="PDBsum" id="8R6C"/>
<dbReference type="PDBsum" id="8R8M"/>
<dbReference type="PDBsum" id="8RCL"/>
<dbReference type="PDBsum" id="8RCM"/>
<dbReference type="PDBsum" id="8RCS"/>
<dbReference type="PDBsum" id="8RCT"/>
<dbReference type="PDBsum" id="8RPY"/>
<dbReference type="PDBsum" id="8RPZ"/>
<dbReference type="PDBsum" id="8RQ0"/>
<dbReference type="PDBsum" id="8RQ2"/>
<dbReference type="PDBsum" id="8SYL"/>
<dbReference type="PDBsum" id="8T5D"/>
<dbReference type="PDBsum" id="8T5H"/>
<dbReference type="PDBsum" id="8UPO"/>
<dbReference type="PDBsum" id="8UPR"/>
<dbReference type="PDBsum" id="8UQL"/>
<dbReference type="PDBsum" id="8UQM"/>
<dbReference type="PDBsum" id="8UQP"/>
<dbReference type="PDBsum" id="8UR0"/>
<dbReference type="PDBsum" id="8URH"/>
<dbReference type="PDBsum" id="8URI"/>
<dbReference type="PDBsum" id="8URX"/>
<dbReference type="PDBsum" id="8URY"/>
<dbReference type="PDBsum" id="8VS9"/>
<dbReference type="PDBsum" id="8VSA"/>
<dbReference type="PDBsum" id="8W51"/>
<dbReference type="PDBsum" id="8YUO"/>
<dbReference type="PDBsum" id="8YUP"/>
<dbReference type="PDBsum" id="8YUQ"/>
<dbReference type="PDBsum" id="8YUR"/>
<dbReference type="PDBsum" id="8YUS"/>
<dbReference type="PDBsum" id="9AX7"/>
<dbReference type="PDBsum" id="9AX8"/>
<dbReference type="PDBsum" id="9CG5"/>
<dbReference type="PDBsum" id="9CG6"/>
<dbReference type="PDBsum" id="9CG7"/>
<dbReference type="PDBsum" id="9CL9"/>
<dbReference type="PDBsum" id="9D89"/>
<dbReference type="PDBsum" id="9DYG"/>
<dbReference type="PDBsum" id="9FBV"/>
<dbReference type="PDBsum" id="9GFT"/>
<dbReference type="PDBsum" id="9GGR"/>
<dbReference type="PDBsum" id="9H3M"/>
<dbReference type="PDBsum" id="9H3N"/>
<dbReference type="PDBsum" id="9H3O"/>
<dbReference type="PDBsum" id="9H3P"/>
<dbReference type="PDBsum" id="9H3Q"/>
<dbReference type="PDBsum" id="9H3R"/>
<dbReference type="PDBsum" id="9H3S"/>
<dbReference type="PDBsum" id="9H3T"/>
<dbReference type="PDBsum" id="9H3U"/>
<dbReference type="PDBsum" id="9H3V"/>
<dbReference type="PDBsum" id="9H3W"/>
<dbReference type="PDBsum" id="9H3X"/>
<dbReference type="PDBsum" id="9H3Y"/>
<dbReference type="PDBsum" id="9H3Z"/>
<dbReference type="PDBsum" id="9HA1"/>
<dbReference type="PDBsum" id="9HA2"/>
<dbReference type="PDBsum" id="9HA3"/>
<dbReference type="PDBsum" id="9HA4"/>
<dbReference type="PDBsum" id="9HA5"/>
<dbReference type="PDBsum" id="9HA6"/>
<dbReference type="PDBsum" id="9HA7"/>
<dbReference type="PDBsum" id="9HAI"/>
<dbReference type="PDBsum" id="9MOR"/>
<dbReference type="PDBsum" id="9MQ4"/>
<dbReference type="EMDB" id="EMD-0076"/>
<dbReference type="EMDB" id="EMD-0080"/>
<dbReference type="EMDB" id="EMD-0081"/>
<dbReference type="EMDB" id="EMD-0082"/>
<dbReference type="EMDB" id="EMD-0083"/>
<dbReference type="EMDB" id="EMD-0137"/>
<dbReference type="EMDB" id="EMD-0139"/>
<dbReference type="EMDB" id="EMD-0261"/>
<dbReference type="EMDB" id="EMD-0322"/>
<dbReference type="EMDB" id="EMD-10073"/>
<dbReference type="EMDB" id="EMD-10353"/>
<dbReference type="EMDB" id="EMD-10453"/>
<dbReference type="EMDB" id="EMD-10458"/>
<dbReference type="EMDB" id="EMD-10655"/>
<dbReference type="EMDB" id="EMD-10656"/>
<dbReference type="EMDB" id="EMD-10657"/>
<dbReference type="EMDB" id="EMD-10705"/>
<dbReference type="EMDB" id="EMD-10905"/>
<dbReference type="EMDB" id="EMD-10906"/>
<dbReference type="EMDB" id="EMD-10907"/>
<dbReference type="EMDB" id="EMD-10908"/>
<dbReference type="EMDB" id="EMD-11418"/>
<dbReference type="EMDB" id="EMD-11419"/>
<dbReference type="EMDB" id="EMD-11420"/>
<dbReference type="EMDB" id="EMD-11421"/>
<dbReference type="EMDB" id="EMD-11422"/>
<dbReference type="EMDB" id="EMD-11423"/>
<dbReference type="EMDB" id="EMD-11426"/>
<dbReference type="EMDB" id="EMD-11710"/>
<dbReference type="EMDB" id="EMD-11713"/>
<dbReference type="EMDB" id="EMD-11717"/>
<dbReference type="EMDB" id="EMD-11718"/>
<dbReference type="EMDB" id="EMD-12035"/>
<dbReference type="EMDB" id="EMD-12215"/>
<dbReference type="EMDB" id="EMD-12216"/>
<dbReference type="EMDB" id="EMD-12217"/>
<dbReference type="EMDB" id="EMD-12218"/>
<dbReference type="EMDB" id="EMD-12219"/>
<dbReference type="EMDB" id="EMD-12261"/>
<dbReference type="EMDB" id="EMD-12573"/>
<dbReference type="EMDB" id="EMD-12574"/>
<dbReference type="EMDB" id="EMD-12575"/>
<dbReference type="EMDB" id="EMD-12635"/>
<dbReference type="EMDB" id="EMD-12636"/>
<dbReference type="EMDB" id="EMD-12693"/>
<dbReference type="EMDB" id="EMD-12694"/>
<dbReference type="EMDB" id="EMD-12695"/>
<dbReference type="EMDB" id="EMD-12826"/>
<dbReference type="EMDB" id="EMD-12928"/>
<dbReference type="EMDB" id="EMD-12929"/>
<dbReference type="EMDB" id="EMD-12930"/>
<dbReference type="EMDB" id="EMD-12936"/>
<dbReference type="EMDB" id="EMD-12937"/>
<dbReference type="EMDB" id="EMD-13055"/>
<dbReference type="EMDB" id="EMD-13180"/>
<dbReference type="EMDB" id="EMD-13458"/>
<dbReference type="EMDB" id="EMD-13459"/>
<dbReference type="EMDB" id="EMD-13460"/>
<dbReference type="EMDB" id="EMD-13461"/>
<dbReference type="EMDB" id="EMD-13462"/>
<dbReference type="EMDB" id="EMD-13463"/>
<dbReference type="EMDB" id="EMD-13464"/>
<dbReference type="EMDB" id="EMD-13465"/>
<dbReference type="EMDB" id="EMD-13805"/>
<dbReference type="EMDB" id="EMD-13952"/>
<dbReference type="EMDB" id="EMD-13956"/>
<dbReference type="EMDB" id="EMD-13958"/>
<dbReference type="EMDB" id="EMD-14121"/>
<dbReference type="EMDB" id="EMD-14454"/>
<dbReference type="EMDB" id="EMD-14846"/>
<dbReference type="EMDB" id="EMD-14850"/>
<dbReference type="EMDB" id="EMD-14864"/>
<dbReference type="EMDB" id="EMD-14865"/>
<dbReference type="EMDB" id="EMD-14956"/>
<dbReference type="EMDB" id="EMD-15116"/>
<dbReference type="EMDB" id="EMD-15558"/>
<dbReference type="EMDB" id="EMD-15712"/>
<dbReference type="EMDB" id="EMD-15793"/>
<dbReference type="EMDB" id="EMD-15905"/>
<dbReference type="EMDB" id="EMD-16015"/>
<dbReference type="EMDB" id="EMD-16029"/>
<dbReference type="EMDB" id="EMD-16031"/>
<dbReference type="EMDB" id="EMD-16047"/>
<dbReference type="EMDB" id="EMD-16057"/>
<dbReference type="EMDB" id="EMD-16059"/>
<dbReference type="EMDB" id="EMD-16062"/>
<dbReference type="EMDB" id="EMD-16065"/>
<dbReference type="EMDB" id="EMD-16081"/>
<dbReference type="EMDB" id="EMD-16082"/>
<dbReference type="EMDB" id="EMD-16494"/>
<dbReference type="EMDB" id="EMD-16495"/>
<dbReference type="EMDB" id="EMD-16496"/>
<dbReference type="EMDB" id="EMD-16497"/>
<dbReference type="EMDB" id="EMD-16498"/>
<dbReference type="EMDB" id="EMD-16499"/>
<dbReference type="EMDB" id="EMD-16500"/>
<dbReference type="EMDB" id="EMD-16501"/>
<dbReference type="EMDB" id="EMD-16502"/>
<dbReference type="EMDB" id="EMD-16503"/>
<dbReference type="EMDB" id="EMD-16504"/>
<dbReference type="EMDB" id="EMD-16505"/>
<dbReference type="EMDB" id="EMD-16506"/>
<dbReference type="EMDB" id="EMD-16507"/>
<dbReference type="EMDB" id="EMD-16508"/>
<dbReference type="EMDB" id="EMD-16530"/>
<dbReference type="EMDB" id="EMD-16613"/>
<dbReference type="EMDB" id="EMD-16641"/>
<dbReference type="EMDB" id="EMD-16646"/>
<dbReference type="EMDB" id="EMD-16652"/>
<dbReference type="EMDB" id="EMD-17346"/>
<dbReference type="EMDB" id="EMD-17347"/>
<dbReference type="EMDB" id="EMD-17348"/>
<dbReference type="EMDB" id="EMD-17631"/>
<dbReference type="EMDB" id="EMD-17667"/>
<dbReference type="EMDB" id="EMD-17743"/>
<dbReference type="EMDB" id="EMD-17959"/>
<dbReference type="EMDB" id="EMD-18145"/>
<dbReference type="EMDB" id="EMD-18320"/>
<dbReference type="EMDB" id="EMD-18458"/>
<dbReference type="EMDB" id="EMD-18534"/>
<dbReference type="EMDB" id="EMD-18875"/>
<dbReference type="EMDB" id="EMD-18950"/>
<dbReference type="EMDB" id="EMD-19004"/>
<dbReference type="EMDB" id="EMD-19054"/>
<dbReference type="EMDB" id="EMD-19055"/>
<dbReference type="EMDB" id="EMD-19058"/>
<dbReference type="EMDB" id="EMD-19059"/>
<dbReference type="EMDB" id="EMD-19426"/>
<dbReference type="EMDB" id="EMD-19427"/>
<dbReference type="EMDB" id="EMD-19428"/>
<dbReference type="EMDB" id="EMD-19429"/>
<dbReference type="EMDB" id="EMD-20048"/>
<dbReference type="EMDB" id="EMD-20052"/>
<dbReference type="EMDB" id="EMD-21420"/>
<dbReference type="EMDB" id="EMD-21421"/>
<dbReference type="EMDB" id="EMD-21422"/>
<dbReference type="EMDB" id="EMD-21625"/>
<dbReference type="EMDB" id="EMD-21630"/>
<dbReference type="EMDB" id="EMD-21631"/>
<dbReference type="EMDB" id="EMD-21632"/>
<dbReference type="EMDB" id="EMD-21633"/>
<dbReference type="EMDB" id="EMD-21634"/>
<dbReference type="EMDB" id="EMD-21635"/>
<dbReference type="EMDB" id="EMD-21636"/>
<dbReference type="EMDB" id="EMD-21637"/>
<dbReference type="EMDB" id="EMD-21638"/>
<dbReference type="EMDB" id="EMD-21639"/>
<dbReference type="EMDB" id="EMD-21640"/>
<dbReference type="EMDB" id="EMD-21641"/>
<dbReference type="EMDB" id="EMD-21856"/>
<dbReference type="EMDB" id="EMD-21857"/>
<dbReference type="EMDB" id="EMD-21858"/>
<dbReference type="EMDB" id="EMD-22459"/>
<dbReference type="EMDB" id="EMD-22461"/>
<dbReference type="EMDB" id="EMD-22464"/>
<dbReference type="EMDB" id="EMD-22466"/>
<dbReference type="EMDB" id="EMD-22469"/>
<dbReference type="EMDB" id="EMD-22472"/>
<dbReference type="EMDB" id="EMD-22669"/>
<dbReference type="EMDB" id="EMD-22670"/>
<dbReference type="EMDB" id="EMD-22671"/>
<dbReference type="EMDB" id="EMD-22672"/>
<dbReference type="EMDB" id="EMD-22673"/>
<dbReference type="EMDB" id="EMD-22674"/>
<dbReference type="EMDB" id="EMD-23528"/>
<dbReference type="EMDB" id="EMD-24120"/>
<dbReference type="EMDB" id="EMD-24132"/>
<dbReference type="EMDB" id="EMD-24133"/>
<dbReference type="EMDB" id="EMD-24134"/>
<dbReference type="EMDB" id="EMD-24135"/>
<dbReference type="EMDB" id="EMD-24136"/>
<dbReference type="EMDB" id="EMD-24803"/>
<dbReference type="EMDB" id="EMD-25405"/>
<dbReference type="EMDB" id="EMD-25407"/>
<dbReference type="EMDB" id="EMD-25409"/>
<dbReference type="EMDB" id="EMD-25410"/>
<dbReference type="EMDB" id="EMD-25411"/>
<dbReference type="EMDB" id="EMD-25415"/>
<dbReference type="EMDB" id="EMD-25418"/>
<dbReference type="EMDB" id="EMD-25420"/>
<dbReference type="EMDB" id="EMD-25421"/>
<dbReference type="EMDB" id="EMD-30215"/>
<dbReference type="EMDB" id="EMD-30598"/>
<dbReference type="EMDB" id="EMD-30611"/>
<dbReference type="EMDB" id="EMD-33660"/>
<dbReference type="EMDB" id="EMD-33661"/>
<dbReference type="EMDB" id="EMD-33662"/>
<dbReference type="EMDB" id="EMD-33663"/>
<dbReference type="EMDB" id="EMD-33664"/>
<dbReference type="EMDB" id="EMD-33665"/>
<dbReference type="EMDB" id="EMD-33904"/>
<dbReference type="EMDB" id="EMD-3489"/>
<dbReference type="EMDB" id="EMD-3490"/>
<dbReference type="EMDB" id="EMD-3492"/>
<dbReference type="EMDB" id="EMD-3493"/>
<dbReference type="EMDB" id="EMD-35001"/>
<dbReference type="EMDB" id="EMD-35020"/>
<dbReference type="EMDB" id="EMD-35022"/>
<dbReference type="EMDB" id="EMD-3508"/>
<dbReference type="EMDB" id="EMD-35411"/>
<dbReference type="EMDB" id="EMD-35412"/>
<dbReference type="EMDB" id="EMD-35939"/>
<dbReference type="EMDB" id="EMD-3617"/>
<dbReference type="EMDB" id="EMD-3713"/>
<dbReference type="EMDB" id="EMD-37271"/>
<dbReference type="EMDB" id="EMD-3730"/>
<dbReference type="EMDB" id="EMD-3898"/>
<dbReference type="EMDB" id="EMD-3899"/>
<dbReference type="EMDB" id="EMD-3903"/>
<dbReference type="EMDB" id="EMD-39577"/>
<dbReference type="EMDB" id="EMD-39578"/>
<dbReference type="EMDB" id="EMD-39579"/>
<dbReference type="EMDB" id="EMD-39580"/>
<dbReference type="EMDB" id="EMD-39581"/>
<dbReference type="EMDB" id="EMD-4001"/>
<dbReference type="EMDB" id="EMD-4121"/>
<dbReference type="EMDB" id="EMD-4122"/>
<dbReference type="EMDB" id="EMD-4123"/>
<dbReference type="EMDB" id="EMD-4124"/>
<dbReference type="EMDB" id="EMD-4125"/>
<dbReference type="EMDB" id="EMD-4126"/>
<dbReference type="EMDB" id="EMD-4378"/>
<dbReference type="EMDB" id="EMD-4379"/>
<dbReference type="EMDB" id="EMD-4380"/>
<dbReference type="EMDB" id="EMD-4381"/>
<dbReference type="EMDB" id="EMD-4382"/>
<dbReference type="EMDB" id="EMD-4383"/>
<dbReference type="EMDB" id="EMD-4476"/>
<dbReference type="EMDB" id="EMD-4477"/>
<dbReference type="EMDB" id="EMD-4478"/>
<dbReference type="EMDB" id="EMD-45666"/>
<dbReference type="EMDB" id="EMD-4638"/>
<dbReference type="EMDB" id="EMD-47303"/>
<dbReference type="EMDB" id="EMD-50296"/>
<dbReference type="EMDB" id="EMD-51318"/>
<dbReference type="EMDB" id="EMD-51340"/>
<dbReference type="EMDB" id="EMD-51830"/>
<dbReference type="EMDB" id="EMD-51831"/>
<dbReference type="EMDB" id="EMD-51832"/>
<dbReference type="EMDB" id="EMD-51833"/>
<dbReference type="EMDB" id="EMD-51834"/>
<dbReference type="EMDB" id="EMD-51835"/>
<dbReference type="EMDB" id="EMD-51836"/>
<dbReference type="EMDB" id="EMD-51837"/>
<dbReference type="EMDB" id="EMD-51838"/>
<dbReference type="EMDB" id="EMD-51839"/>
<dbReference type="EMDB" id="EMD-51840"/>
<dbReference type="EMDB" id="EMD-51841"/>
<dbReference type="EMDB" id="EMD-51842"/>
<dbReference type="EMDB" id="EMD-51843"/>
<dbReference type="EMDB" id="EMD-51973"/>
<dbReference type="EMDB" id="EMD-51974"/>
<dbReference type="EMDB" id="EMD-51975"/>
<dbReference type="EMDB" id="EMD-51976"/>
<dbReference type="EMDB" id="EMD-51977"/>
<dbReference type="EMDB" id="EMD-51978"/>
<dbReference type="EMDB" id="EMD-51979"/>
<dbReference type="EMDB" id="EMD-51981"/>
<dbReference type="EMDB" id="EMD-6667"/>
<dbReference type="EMDB" id="EMD-7289"/>
<dbReference type="EMDB" id="EMD-7341"/>
<dbReference type="EMDB" id="EMD-8000"/>
<dbReference type="EMDB" id="EMD-8001"/>
<dbReference type="EMDB" id="EMD-8002"/>
<dbReference type="EMDB" id="EMD-8003"/>
<dbReference type="EMDB" id="EMD-8004"/>
<dbReference type="EMDB" id="EMD-8107"/>
<dbReference type="EMDB" id="EMD-8175"/>
<dbReference type="EMDB" id="EMD-8176"/>
<dbReference type="EMDB" id="EMD-8237"/>
<dbReference type="EMDB" id="EMD-8238"/>
<dbReference type="EMDB" id="EMD-8279"/>
<dbReference type="EMDB" id="EMD-8280"/>
<dbReference type="EMDB" id="EMD-8281"/>
<dbReference type="EMDB" id="EMD-8282"/>
<dbReference type="EMDB" id="EMD-8505"/>
<dbReference type="EMDB" id="EMD-8615"/>
<dbReference type="EMDB" id="EMD-8616"/>
<dbReference type="EMDB" id="EMD-8617"/>
<dbReference type="EMDB" id="EMD-8618"/>
<dbReference type="EMDB" id="EMD-8619"/>
<dbReference type="EMDB" id="EMD-8620"/>
<dbReference type="EMDB" id="EMD-8813"/>
<dbReference type="EMDB" id="EMD-8814"/>
<dbReference type="EMDB" id="EMD-8815"/>
<dbReference type="EMDB" id="EMD-8828"/>
<dbReference type="SMR" id="P0A7P5"/>
<dbReference type="BioGRID" id="4259536">
    <property type="interactions" value="4"/>
</dbReference>
<dbReference type="ComplexPortal" id="CPX-3807">
    <property type="entry name" value="50S large ribosomal subunit"/>
</dbReference>
<dbReference type="DIP" id="DIP-581N"/>
<dbReference type="FunCoup" id="P0A7P5">
    <property type="interactions" value="503"/>
</dbReference>
<dbReference type="IntAct" id="P0A7P5">
    <property type="interactions" value="16"/>
</dbReference>
<dbReference type="STRING" id="511145.b3703"/>
<dbReference type="PaxDb" id="511145-b3703"/>
<dbReference type="EnsemblBacteria" id="AAC76726">
    <property type="protein sequence ID" value="AAC76726"/>
    <property type="gene ID" value="b3703"/>
</dbReference>
<dbReference type="GeneID" id="948216"/>
<dbReference type="GeneID" id="98190980"/>
<dbReference type="KEGG" id="ecj:JW3680"/>
<dbReference type="KEGG" id="eco:b3703"/>
<dbReference type="KEGG" id="ecoc:C3026_20075"/>
<dbReference type="PATRIC" id="fig|1411691.4.peg.3000"/>
<dbReference type="EchoBASE" id="EB0885"/>
<dbReference type="eggNOG" id="COG0230">
    <property type="taxonomic scope" value="Bacteria"/>
</dbReference>
<dbReference type="HOGENOM" id="CLU_129938_2_1_6"/>
<dbReference type="InParanoid" id="P0A7P5"/>
<dbReference type="OrthoDB" id="9804164at2"/>
<dbReference type="PhylomeDB" id="P0A7P5"/>
<dbReference type="BioCyc" id="EcoCyc:EG10892-MONOMER"/>
<dbReference type="BioCyc" id="MetaCyc:EG10892-MONOMER"/>
<dbReference type="EvolutionaryTrace" id="P0A7P5"/>
<dbReference type="PRO" id="PR:P0A7P5"/>
<dbReference type="Proteomes" id="UP000000625">
    <property type="component" value="Chromosome"/>
</dbReference>
<dbReference type="GO" id="GO:0005737">
    <property type="term" value="C:cytoplasm"/>
    <property type="evidence" value="ECO:0000314"/>
    <property type="project" value="ComplexPortal"/>
</dbReference>
<dbReference type="GO" id="GO:0022625">
    <property type="term" value="C:cytosolic large ribosomal subunit"/>
    <property type="evidence" value="ECO:0000314"/>
    <property type="project" value="EcoCyc"/>
</dbReference>
<dbReference type="GO" id="GO:0003735">
    <property type="term" value="F:structural constituent of ribosome"/>
    <property type="evidence" value="ECO:0007669"/>
    <property type="project" value="InterPro"/>
</dbReference>
<dbReference type="GO" id="GO:0002181">
    <property type="term" value="P:cytoplasmic translation"/>
    <property type="evidence" value="ECO:0000303"/>
    <property type="project" value="ComplexPortal"/>
</dbReference>
<dbReference type="FunFam" id="1.10.287.3980:FF:000001">
    <property type="entry name" value="Mitochondrial ribosomal protein L34"/>
    <property type="match status" value="1"/>
</dbReference>
<dbReference type="Gene3D" id="1.10.287.3980">
    <property type="match status" value="1"/>
</dbReference>
<dbReference type="HAMAP" id="MF_00391">
    <property type="entry name" value="Ribosomal_bL34"/>
    <property type="match status" value="1"/>
</dbReference>
<dbReference type="InterPro" id="IPR000271">
    <property type="entry name" value="Ribosomal_bL34"/>
</dbReference>
<dbReference type="InterPro" id="IPR020939">
    <property type="entry name" value="Ribosomal_bL34_CS"/>
</dbReference>
<dbReference type="NCBIfam" id="TIGR01030">
    <property type="entry name" value="rpmH_bact"/>
    <property type="match status" value="1"/>
</dbReference>
<dbReference type="PANTHER" id="PTHR14503:SF4">
    <property type="entry name" value="LARGE RIBOSOMAL SUBUNIT PROTEIN BL34M"/>
    <property type="match status" value="1"/>
</dbReference>
<dbReference type="PANTHER" id="PTHR14503">
    <property type="entry name" value="MITOCHONDRIAL RIBOSOMAL PROTEIN 34 FAMILY MEMBER"/>
    <property type="match status" value="1"/>
</dbReference>
<dbReference type="Pfam" id="PF00468">
    <property type="entry name" value="Ribosomal_L34"/>
    <property type="match status" value="1"/>
</dbReference>
<dbReference type="PROSITE" id="PS00784">
    <property type="entry name" value="RIBOSOMAL_L34"/>
    <property type="match status" value="1"/>
</dbReference>
<accession>P0A7P5</accession>
<accession>P02437</accession>
<accession>Q2M815</accession>
<sequence length="46" mass="5380">MKRTFQPSVLKRNRSHGFRARMATKNGRQVLARRRAKGRARLTVSK</sequence>
<organism>
    <name type="scientific">Escherichia coli (strain K12)</name>
    <dbReference type="NCBI Taxonomy" id="83333"/>
    <lineage>
        <taxon>Bacteria</taxon>
        <taxon>Pseudomonadati</taxon>
        <taxon>Pseudomonadota</taxon>
        <taxon>Gammaproteobacteria</taxon>
        <taxon>Enterobacterales</taxon>
        <taxon>Enterobacteriaceae</taxon>
        <taxon>Escherichia</taxon>
    </lineage>
</organism>
<gene>
    <name type="primary">rpmH</name>
    <name type="synonym">rimA</name>
    <name type="synonym">ssaF</name>
    <name type="ordered locus">b3703</name>
    <name type="ordered locus">JW3680</name>
</gene>
<keyword id="KW-0002">3D-structure</keyword>
<keyword id="KW-0903">Direct protein sequencing</keyword>
<keyword id="KW-1185">Reference proteome</keyword>
<keyword id="KW-0687">Ribonucleoprotein</keyword>
<keyword id="KW-0689">Ribosomal protein</keyword>
<proteinExistence type="evidence at protein level"/>
<feature type="chain" id="PRO_0000187377" description="Large ribosomal subunit protein bL34">
    <location>
        <begin position="1"/>
        <end position="46"/>
    </location>
</feature>
<feature type="helix" evidence="12">
    <location>
        <begin position="9"/>
        <end position="16"/>
    </location>
</feature>
<feature type="helix" evidence="12">
    <location>
        <begin position="18"/>
        <end position="22"/>
    </location>
</feature>
<feature type="helix" evidence="12">
    <location>
        <begin position="25"/>
        <end position="37"/>
    </location>
</feature>
<feature type="strand" evidence="11">
    <location>
        <begin position="42"/>
        <end position="44"/>
    </location>
</feature>
<reference key="1">
    <citation type="journal article" date="1976" name="Hoppe-Seyler's Z. Physiol. Chem.">
        <title>The sequence determination of a protein in a micro scale: the sequence analysis of ribosomal protein L34 of Escherichia coli.</title>
        <authorList>
            <person name="Chen R."/>
        </authorList>
    </citation>
    <scope>PROTEIN SEQUENCE</scope>
    <scope>SUBUNIT</scope>
    <source>
        <strain>K12</strain>
    </source>
</reference>
<reference key="2">
    <citation type="journal article" date="1982" name="EMBO J.">
        <title>The nucleotide sequence of the dnaA gene promoter and of the adjacent rpmH gene, coding for the ribosomal protein L34, of Escherichia coli.</title>
        <authorList>
            <person name="Hansen F.G."/>
            <person name="Hansen E.B."/>
            <person name="Atlung T."/>
        </authorList>
    </citation>
    <scope>NUCLEOTIDE SEQUENCE [GENOMIC DNA]</scope>
</reference>
<reference key="3">
    <citation type="journal article" date="1985" name="Gene">
        <title>Physical mapping and nucleotide sequence of the rnpA gene that encodes the protein component of ribonuclease P in Escherichia coli.</title>
        <authorList>
            <person name="Hansen F.G."/>
            <person name="Hansen E.B."/>
            <person name="Atlung T."/>
        </authorList>
    </citation>
    <scope>NUCLEOTIDE SEQUENCE [GENOMIC DNA]</scope>
    <source>
        <strain>K12</strain>
    </source>
</reference>
<reference key="4">
    <citation type="journal article" date="1993" name="Genomics">
        <title>DNA sequence and analysis of 136 kilobases of the Escherichia coli genome: organizational symmetry around the origin of replication.</title>
        <authorList>
            <person name="Burland V.D."/>
            <person name="Plunkett G. III"/>
            <person name="Daniels D.L."/>
            <person name="Blattner F.R."/>
        </authorList>
    </citation>
    <scope>NUCLEOTIDE SEQUENCE [LARGE SCALE GENOMIC DNA]</scope>
    <source>
        <strain>K12 / MG1655 / ATCC 47076</strain>
    </source>
</reference>
<reference key="5">
    <citation type="journal article" date="1997" name="Science">
        <title>The complete genome sequence of Escherichia coli K-12.</title>
        <authorList>
            <person name="Blattner F.R."/>
            <person name="Plunkett G. III"/>
            <person name="Bloch C.A."/>
            <person name="Perna N.T."/>
            <person name="Burland V."/>
            <person name="Riley M."/>
            <person name="Collado-Vides J."/>
            <person name="Glasner J.D."/>
            <person name="Rode C.K."/>
            <person name="Mayhew G.F."/>
            <person name="Gregor J."/>
            <person name="Davis N.W."/>
            <person name="Kirkpatrick H.A."/>
            <person name="Goeden M.A."/>
            <person name="Rose D.J."/>
            <person name="Mau B."/>
            <person name="Shao Y."/>
        </authorList>
    </citation>
    <scope>NUCLEOTIDE SEQUENCE [LARGE SCALE GENOMIC DNA]</scope>
    <source>
        <strain>K12 / MG1655 / ATCC 47076</strain>
    </source>
</reference>
<reference key="6">
    <citation type="journal article" date="2006" name="Mol. Syst. Biol.">
        <title>Highly accurate genome sequences of Escherichia coli K-12 strains MG1655 and W3110.</title>
        <authorList>
            <person name="Hayashi K."/>
            <person name="Morooka N."/>
            <person name="Yamamoto Y."/>
            <person name="Fujita K."/>
            <person name="Isono K."/>
            <person name="Choi S."/>
            <person name="Ohtsubo E."/>
            <person name="Baba T."/>
            <person name="Wanner B.L."/>
            <person name="Mori H."/>
            <person name="Horiuchi T."/>
        </authorList>
    </citation>
    <scope>NUCLEOTIDE SEQUENCE [LARGE SCALE GENOMIC DNA]</scope>
    <source>
        <strain>K12 / W3110 / ATCC 27325 / DSM 5911</strain>
    </source>
</reference>
<reference key="7">
    <citation type="journal article" date="1999" name="Anal. Biochem.">
        <title>Observation of Escherichia coli ribosomal proteins and their posttranslational modifications by mass spectrometry.</title>
        <authorList>
            <person name="Arnold R.J."/>
            <person name="Reilly J.P."/>
        </authorList>
    </citation>
    <scope>MASS SPECTROMETRY</scope>
    <scope>SUBUNIT</scope>
    <source>
        <strain>K12 / ATCC 25404 / DSM 5698 / NCIMB 11290</strain>
    </source>
</reference>
<reference key="8">
    <citation type="journal article" date="2014" name="Curr. Opin. Struct. Biol.">
        <title>A new system for naming ribosomal proteins.</title>
        <authorList>
            <person name="Ban N."/>
            <person name="Beckmann R."/>
            <person name="Cate J.H.D."/>
            <person name="Dinman J.D."/>
            <person name="Dragon F."/>
            <person name="Ellis S.R."/>
            <person name="Lafontaine D.L.J."/>
            <person name="Lindahl L."/>
            <person name="Liljas A."/>
            <person name="Lipton J.M."/>
            <person name="McAlear M.A."/>
            <person name="Moore P.B."/>
            <person name="Noller H.F."/>
            <person name="Ortega J."/>
            <person name="Panse V.G."/>
            <person name="Ramakrishnan V."/>
            <person name="Spahn C.M.T."/>
            <person name="Steitz T.A."/>
            <person name="Tchorzewski M."/>
            <person name="Tollervey D."/>
            <person name="Warren A.J."/>
            <person name="Williamson J.R."/>
            <person name="Wilson D."/>
            <person name="Yonath A."/>
            <person name="Yusupov M."/>
        </authorList>
    </citation>
    <scope>NOMENCLATURE</scope>
</reference>
<reference key="9">
    <citation type="journal article" date="2005" name="Science">
        <title>Structures of the bacterial ribosome at 3.5 A resolution.</title>
        <authorList>
            <person name="Schuwirth B.S."/>
            <person name="Borovinskaya M.A."/>
            <person name="Hau C.W."/>
            <person name="Zhang W."/>
            <person name="Vila-Sanjurjo A."/>
            <person name="Holton J.M."/>
            <person name="Cate J.H.D."/>
        </authorList>
    </citation>
    <scope>X-RAY CRYSTALLOGRAPHY (3.46 ANGSTROMS) OF 2 DIFFERENT RIBOSOME STRUCTURES</scope>
    <scope>SUBUNIT</scope>
    <source>
        <strain>MRE-600</strain>
    </source>
</reference>
<reference key="10">
    <citation type="journal article" date="2014" name="Cell Rep.">
        <title>Molecular basis for the ribosome functioning as an L-tryptophan sensor.</title>
        <authorList>
            <person name="Bischoff L."/>
            <person name="Berninghausen O."/>
            <person name="Beckmann R."/>
        </authorList>
    </citation>
    <scope>STRUCTURE BY ELECTRON MICROSCOPY (3.80 ANGSTROMS) OF TNAC-STALLED 50S RIBOSOMAL SUBUNIT</scope>
    <scope>SUBUNIT</scope>
    <source>
        <strain>K12 / A19 / KC6</strain>
    </source>
</reference>
<reference key="11">
    <citation type="journal article" date="2014" name="PLoS Biol.">
        <title>Structural and functional insights into the mode of action of a universally conserved Obg GTPase.</title>
        <authorList>
            <person name="Feng B."/>
            <person name="Mandava C.S."/>
            <person name="Guo Q."/>
            <person name="Wang J."/>
            <person name="Cao W."/>
            <person name="Li N."/>
            <person name="Zhang Y."/>
            <person name="Zhang Y."/>
            <person name="Wang Z."/>
            <person name="Wu J."/>
            <person name="Sanyal S."/>
            <person name="Lei J."/>
            <person name="Gao N."/>
        </authorList>
    </citation>
    <scope>STRUCTURE BY ELECTRON MICROSCOPY (5.5 ANGSTROMS) OF 50S RIBOSOMAL SUBUNIT IN COMPLEX WITH OBGE AND GMP-PNP</scope>
    <scope>SUBUNIT</scope>
</reference>
<reference key="12">
    <citation type="journal article" date="2017" name="Nature">
        <title>Mechanistic insights into the alternative translation termination by ArfA and RF2.</title>
        <authorList>
            <person name="Ma C."/>
            <person name="Kurita D."/>
            <person name="Li N."/>
            <person name="Chen Y."/>
            <person name="Himeno H."/>
            <person name="Gao N."/>
        </authorList>
    </citation>
    <scope>STRUCTURE BY ELECTRON MICROSCOPY (3.0 ANGSTROMS) OF 70S RIBOSOME IN COMPLEX WITH ARFA AND RF2</scope>
    <scope>SUBUNIT</scope>
</reference>
<reference key="13">
    <citation type="journal article" date="2017" name="Nature">
        <title>Structural basis for ArfA-RF2-mediated translation termination on mRNAs lacking stop codons.</title>
        <authorList>
            <person name="Huter P."/>
            <person name="Mueller C."/>
            <person name="Beckert B."/>
            <person name="Arenz S."/>
            <person name="Berninghausen O."/>
            <person name="Beckmann R."/>
            <person name="Wilson D.N."/>
        </authorList>
    </citation>
    <scope>STRUCTURE BY ELECTRON MICROSCOPY (3.1 ANGSTROMS) OF 70S RIBOSOME IN COMPLEX WITH ARFA AND RF2</scope>
    <scope>SUBUNIT</scope>
</reference>
<reference key="14">
    <citation type="journal article" date="2016" name="Science">
        <title>Translational termination without a stop codon.</title>
        <authorList>
            <person name="James N.R."/>
            <person name="Brown A."/>
            <person name="Gordiyenko Y."/>
            <person name="Ramakrishnan V."/>
        </authorList>
    </citation>
    <scope>STRUCTURE BY ELECTRON MICROSCOPY (2.97 ANGSTROMS) OF 70S RIBOSOME IN COMPLEX WITH ARFA AND RF2</scope>
    <scope>SUBUNIT</scope>
</reference>
<reference key="15">
    <citation type="journal article" date="2017" name="Nature">
        <title>Structural basis of co-translational quality control by ArfA and RF2 bound to ribosome.</title>
        <authorList>
            <person name="Zeng F."/>
            <person name="Chen Y."/>
            <person name="Remis J."/>
            <person name="Shekhar M."/>
            <person name="Phillips J.C."/>
            <person name="Tajkhorshid E."/>
            <person name="Jin H."/>
        </authorList>
    </citation>
    <scope>STRUCTURE BY ELECTRON MICROSCOPY (3.52 ANGSTROMS) OF 70S RIBOSOME IN COMPLEX WITH ARFA AND RF2</scope>
    <scope>SUBUNIT</scope>
</reference>
<comment type="subunit">
    <text evidence="1 2 3 4 5 6 7 8">Part of the 50S ribosomal subunit.</text>
</comment>
<comment type="mass spectrometry" mass="5380.5" method="MALDI" evidence="1"/>
<comment type="similarity">
    <text evidence="10">Belongs to the bacterial ribosomal protein bL34 family.</text>
</comment>
<name>RL34_ECOLI</name>
<protein>
    <recommendedName>
        <fullName evidence="9">Large ribosomal subunit protein bL34</fullName>
    </recommendedName>
    <alternativeName>
        <fullName>50S ribosomal protein L34</fullName>
    </alternativeName>
</protein>
<evidence type="ECO:0000269" key="1">
    <source>
    </source>
</evidence>
<evidence type="ECO:0000269" key="2">
    <source>
    </source>
</evidence>
<evidence type="ECO:0000269" key="3">
    <source>
    </source>
</evidence>
<evidence type="ECO:0000269" key="4">
    <source>
    </source>
</evidence>
<evidence type="ECO:0000269" key="5">
    <source>
    </source>
</evidence>
<evidence type="ECO:0000269" key="6">
    <source>
    </source>
</evidence>
<evidence type="ECO:0000269" key="7">
    <source>
    </source>
</evidence>
<evidence type="ECO:0000269" key="8">
    <source>
    </source>
</evidence>
<evidence type="ECO:0000303" key="9">
    <source>
    </source>
</evidence>
<evidence type="ECO:0000305" key="10"/>
<evidence type="ECO:0007829" key="11">
    <source>
        <dbReference type="PDB" id="7ODE"/>
    </source>
</evidence>
<evidence type="ECO:0007829" key="12">
    <source>
        <dbReference type="PDB" id="8CGK"/>
    </source>
</evidence>